<dbReference type="EC" id="1.6.2.-" evidence="45"/>
<dbReference type="EMBL" id="X04225">
    <property type="protein sequence ID" value="CAA27803.1"/>
    <property type="molecule type" value="mRNA"/>
</dbReference>
<dbReference type="EMBL" id="X04494">
    <property type="protein sequence ID" value="CAA28182.1"/>
    <property type="molecule type" value="mRNA"/>
</dbReference>
<dbReference type="EMBL" id="X54816">
    <property type="protein sequence ID" value="CAA38585.1"/>
    <property type="molecule type" value="Genomic_DNA"/>
</dbReference>
<dbReference type="EMBL" id="X54817">
    <property type="protein sequence ID" value="CAA38585.1"/>
    <property type="status" value="JOINED"/>
    <property type="molecule type" value="Genomic_DNA"/>
</dbReference>
<dbReference type="EMBL" id="X54818">
    <property type="protein sequence ID" value="CAA38585.1"/>
    <property type="status" value="JOINED"/>
    <property type="molecule type" value="Genomic_DNA"/>
</dbReference>
<dbReference type="EMBL" id="X54817">
    <property type="protein sequence ID" value="CAA38586.1"/>
    <property type="molecule type" value="Genomic_DNA"/>
</dbReference>
<dbReference type="EMBL" id="X54818">
    <property type="protein sequence ID" value="CAA38587.1"/>
    <property type="molecule type" value="Genomic_DNA"/>
</dbReference>
<dbReference type="EMBL" id="M88249">
    <property type="protein sequence ID" value="AAA59196.1"/>
    <property type="molecule type" value="Genomic_DNA"/>
</dbReference>
<dbReference type="EMBL" id="M88165">
    <property type="protein sequence ID" value="AAA59196.1"/>
    <property type="status" value="JOINED"/>
    <property type="molecule type" value="Genomic_DNA"/>
</dbReference>
<dbReference type="EMBL" id="M88243">
    <property type="protein sequence ID" value="AAA59196.1"/>
    <property type="status" value="JOINED"/>
    <property type="molecule type" value="Genomic_DNA"/>
</dbReference>
<dbReference type="EMBL" id="M88244">
    <property type="protein sequence ID" value="AAA59196.1"/>
    <property type="status" value="JOINED"/>
    <property type="molecule type" value="Genomic_DNA"/>
</dbReference>
<dbReference type="EMBL" id="M88246">
    <property type="protein sequence ID" value="AAA59196.1"/>
    <property type="status" value="JOINED"/>
    <property type="molecule type" value="Genomic_DNA"/>
</dbReference>
<dbReference type="EMBL" id="M88247">
    <property type="protein sequence ID" value="AAA59196.1"/>
    <property type="status" value="JOINED"/>
    <property type="molecule type" value="Genomic_DNA"/>
</dbReference>
<dbReference type="EMBL" id="AY544123">
    <property type="protein sequence ID" value="AAT11154.1"/>
    <property type="molecule type" value="mRNA"/>
</dbReference>
<dbReference type="EMBL" id="AK290837">
    <property type="protein sequence ID" value="BAF83526.1"/>
    <property type="molecule type" value="mRNA"/>
</dbReference>
<dbReference type="EMBL" id="AL137850">
    <property type="status" value="NOT_ANNOTATED_CDS"/>
    <property type="molecule type" value="Genomic_DNA"/>
</dbReference>
<dbReference type="EMBL" id="CH471090">
    <property type="protein sequence ID" value="EAW87404.1"/>
    <property type="molecule type" value="Genomic_DNA"/>
</dbReference>
<dbReference type="EMBL" id="BC041593">
    <property type="protein sequence ID" value="AAH41593.1"/>
    <property type="molecule type" value="mRNA"/>
</dbReference>
<dbReference type="CCDS" id="CCDS6800.1"/>
<dbReference type="PIR" id="S13433">
    <property type="entry name" value="HCHU"/>
</dbReference>
<dbReference type="RefSeq" id="NP_001624.1">
    <property type="nucleotide sequence ID" value="NM_001633.4"/>
</dbReference>
<dbReference type="PDB" id="1BIK">
    <property type="method" value="X-ray"/>
    <property type="resolution" value="2.50 A"/>
    <property type="chains" value="A=206-352"/>
</dbReference>
<dbReference type="PDB" id="3QKG">
    <property type="method" value="X-ray"/>
    <property type="resolution" value="2.30 A"/>
    <property type="chains" value="A=20-202"/>
</dbReference>
<dbReference type="PDB" id="4ES7">
    <property type="method" value="X-ray"/>
    <property type="resolution" value="2.00 A"/>
    <property type="chains" value="A=27-193"/>
</dbReference>
<dbReference type="PDB" id="4U30">
    <property type="method" value="X-ray"/>
    <property type="resolution" value="2.50 A"/>
    <property type="chains" value="W/X/Y/Z=283-340"/>
</dbReference>
<dbReference type="PDB" id="6EJ7">
    <property type="method" value="X-ray"/>
    <property type="resolution" value="2.00 A"/>
    <property type="chains" value="B=210-221"/>
</dbReference>
<dbReference type="PDB" id="6EJ8">
    <property type="method" value="X-ray"/>
    <property type="resolution" value="2.09 A"/>
    <property type="chains" value="B=210-221"/>
</dbReference>
<dbReference type="PDB" id="6EJ9">
    <property type="method" value="X-ray"/>
    <property type="resolution" value="2.02 A"/>
    <property type="chains" value="B=210-220"/>
</dbReference>
<dbReference type="PDB" id="6EJA">
    <property type="method" value="X-ray"/>
    <property type="resolution" value="1.94 A"/>
    <property type="chains" value="B=210-221"/>
</dbReference>
<dbReference type="PDB" id="6EJB">
    <property type="method" value="X-ray"/>
    <property type="resolution" value="2.56 A"/>
    <property type="chains" value="B=210-221"/>
</dbReference>
<dbReference type="PDB" id="6EJC">
    <property type="method" value="X-ray"/>
    <property type="resolution" value="2.06 A"/>
    <property type="chains" value="B=210-221"/>
</dbReference>
<dbReference type="PDB" id="6EJD">
    <property type="method" value="X-ray"/>
    <property type="resolution" value="2.68 A"/>
    <property type="chains" value="B=210-221"/>
</dbReference>
<dbReference type="PDBsum" id="1BIK"/>
<dbReference type="PDBsum" id="3QKG"/>
<dbReference type="PDBsum" id="4ES7"/>
<dbReference type="PDBsum" id="4U30"/>
<dbReference type="PDBsum" id="6EJ7"/>
<dbReference type="PDBsum" id="6EJ8"/>
<dbReference type="PDBsum" id="6EJ9"/>
<dbReference type="PDBsum" id="6EJA"/>
<dbReference type="PDBsum" id="6EJB"/>
<dbReference type="PDBsum" id="6EJC"/>
<dbReference type="PDBsum" id="6EJD"/>
<dbReference type="SMR" id="P02760"/>
<dbReference type="BioGRID" id="106757">
    <property type="interactions" value="23"/>
</dbReference>
<dbReference type="FunCoup" id="P02760">
    <property type="interactions" value="230"/>
</dbReference>
<dbReference type="IntAct" id="P02760">
    <property type="interactions" value="13"/>
</dbReference>
<dbReference type="MINT" id="P02760"/>
<dbReference type="STRING" id="9606.ENSP00000265132"/>
<dbReference type="MEROPS" id="I02.005"/>
<dbReference type="MEROPS" id="I02.006"/>
<dbReference type="CarbonylDB" id="P02760"/>
<dbReference type="GlyConnect" id="21">
    <property type="glycosylation" value="31 N-Linked glycans (2 sites), 7 O-Linked glycans (3 sites)"/>
</dbReference>
<dbReference type="GlyCosmos" id="P02760">
    <property type="glycosylation" value="7 sites, 37 glycans"/>
</dbReference>
<dbReference type="GlyGen" id="P02760">
    <property type="glycosylation" value="9 sites, 95 N-linked glycans (2 sites), 9 O-linked glycans (4 sites)"/>
</dbReference>
<dbReference type="iPTMnet" id="P02760"/>
<dbReference type="PhosphoSitePlus" id="P02760"/>
<dbReference type="SwissPalm" id="P02760"/>
<dbReference type="BioMuta" id="AMBP"/>
<dbReference type="DMDM" id="122801"/>
<dbReference type="CPTAC" id="non-CPTAC-1152"/>
<dbReference type="CPTAC" id="non-CPTAC-1153"/>
<dbReference type="jPOST" id="P02760"/>
<dbReference type="MassIVE" id="P02760"/>
<dbReference type="PaxDb" id="9606-ENSP00000265132"/>
<dbReference type="PeptideAtlas" id="P02760"/>
<dbReference type="ProteomicsDB" id="51583"/>
<dbReference type="Antibodypedia" id="876">
    <property type="antibodies" value="565 antibodies from 36 providers"/>
</dbReference>
<dbReference type="DNASU" id="259"/>
<dbReference type="Ensembl" id="ENST00000265132.8">
    <property type="protein sequence ID" value="ENSP00000265132.3"/>
    <property type="gene ID" value="ENSG00000106927.12"/>
</dbReference>
<dbReference type="GeneID" id="259"/>
<dbReference type="KEGG" id="hsa:259"/>
<dbReference type="MANE-Select" id="ENST00000265132.8">
    <property type="protein sequence ID" value="ENSP00000265132.3"/>
    <property type="RefSeq nucleotide sequence ID" value="NM_001633.4"/>
    <property type="RefSeq protein sequence ID" value="NP_001624.1"/>
</dbReference>
<dbReference type="UCSC" id="uc004bie.5">
    <property type="organism name" value="human"/>
</dbReference>
<dbReference type="AGR" id="HGNC:453"/>
<dbReference type="CTD" id="259"/>
<dbReference type="DisGeNET" id="259"/>
<dbReference type="GeneCards" id="AMBP"/>
<dbReference type="HGNC" id="HGNC:453">
    <property type="gene designation" value="AMBP"/>
</dbReference>
<dbReference type="HPA" id="ENSG00000106927">
    <property type="expression patterns" value="Tissue enriched (liver)"/>
</dbReference>
<dbReference type="MIM" id="176870">
    <property type="type" value="gene"/>
</dbReference>
<dbReference type="neXtProt" id="NX_P02760"/>
<dbReference type="OpenTargets" id="ENSG00000106927"/>
<dbReference type="PharmGKB" id="PA24759"/>
<dbReference type="VEuPathDB" id="HostDB:ENSG00000106927"/>
<dbReference type="eggNOG" id="KOG4295">
    <property type="taxonomic scope" value="Eukaryota"/>
</dbReference>
<dbReference type="GeneTree" id="ENSGT00940000160109"/>
<dbReference type="HOGENOM" id="CLU_067584_0_0_1"/>
<dbReference type="InParanoid" id="P02760"/>
<dbReference type="OrthoDB" id="9949223at2759"/>
<dbReference type="PAN-GO" id="P02760">
    <property type="GO annotations" value="3 GO annotations based on evolutionary models"/>
</dbReference>
<dbReference type="PhylomeDB" id="P02760"/>
<dbReference type="TreeFam" id="TF351222"/>
<dbReference type="PathwayCommons" id="P02760"/>
<dbReference type="Reactome" id="R-HSA-2168880">
    <property type="pathway name" value="Scavenging of heme from plasma"/>
</dbReference>
<dbReference type="SignaLink" id="P02760"/>
<dbReference type="BioGRID-ORCS" id="259">
    <property type="hits" value="9 hits in 1148 CRISPR screens"/>
</dbReference>
<dbReference type="ChiTaRS" id="AMBP">
    <property type="organism name" value="human"/>
</dbReference>
<dbReference type="EvolutionaryTrace" id="P02760"/>
<dbReference type="GeneWiki" id="Alpha-1-microglobulin/bikunin_precursor"/>
<dbReference type="GenomeRNAi" id="259"/>
<dbReference type="Pharos" id="P02760">
    <property type="development level" value="Tbio"/>
</dbReference>
<dbReference type="PRO" id="PR:P02760"/>
<dbReference type="Proteomes" id="UP000005640">
    <property type="component" value="Chromosome 9"/>
</dbReference>
<dbReference type="RNAct" id="P02760">
    <property type="molecule type" value="protein"/>
</dbReference>
<dbReference type="Bgee" id="ENSG00000106927">
    <property type="expression patterns" value="Expressed in right lobe of liver and 107 other cell types or tissues"/>
</dbReference>
<dbReference type="ExpressionAtlas" id="P02760">
    <property type="expression patterns" value="baseline and differential"/>
</dbReference>
<dbReference type="GO" id="GO:0072562">
    <property type="term" value="C:blood microparticle"/>
    <property type="evidence" value="ECO:0007005"/>
    <property type="project" value="UniProtKB"/>
</dbReference>
<dbReference type="GO" id="GO:0009986">
    <property type="term" value="C:cell surface"/>
    <property type="evidence" value="ECO:0000318"/>
    <property type="project" value="GO_Central"/>
</dbReference>
<dbReference type="GO" id="GO:0062023">
    <property type="term" value="C:collagen-containing extracellular matrix"/>
    <property type="evidence" value="ECO:0007005"/>
    <property type="project" value="BHF-UCL"/>
</dbReference>
<dbReference type="GO" id="GO:0005829">
    <property type="term" value="C:cytosol"/>
    <property type="evidence" value="ECO:0007669"/>
    <property type="project" value="UniProtKB-SubCell"/>
</dbReference>
<dbReference type="GO" id="GO:0005783">
    <property type="term" value="C:endoplasmic reticulum"/>
    <property type="evidence" value="ECO:0007669"/>
    <property type="project" value="UniProtKB-SubCell"/>
</dbReference>
<dbReference type="GO" id="GO:0070062">
    <property type="term" value="C:extracellular exosome"/>
    <property type="evidence" value="ECO:0007005"/>
    <property type="project" value="UniProtKB"/>
</dbReference>
<dbReference type="GO" id="GO:0005576">
    <property type="term" value="C:extracellular region"/>
    <property type="evidence" value="ECO:0000304"/>
    <property type="project" value="Reactome"/>
</dbReference>
<dbReference type="GO" id="GO:0005615">
    <property type="term" value="C:extracellular space"/>
    <property type="evidence" value="ECO:0007005"/>
    <property type="project" value="UniProtKB"/>
</dbReference>
<dbReference type="GO" id="GO:0005743">
    <property type="term" value="C:mitochondrial inner membrane"/>
    <property type="evidence" value="ECO:0007669"/>
    <property type="project" value="UniProtKB-SubCell"/>
</dbReference>
<dbReference type="GO" id="GO:0031965">
    <property type="term" value="C:nuclear membrane"/>
    <property type="evidence" value="ECO:0007669"/>
    <property type="project" value="UniProtKB-SubCell"/>
</dbReference>
<dbReference type="GO" id="GO:0005886">
    <property type="term" value="C:plasma membrane"/>
    <property type="evidence" value="ECO:0000314"/>
    <property type="project" value="UniProtKB"/>
</dbReference>
<dbReference type="GO" id="GO:0019855">
    <property type="term" value="F:calcium channel inhibitor activity"/>
    <property type="evidence" value="ECO:0000303"/>
    <property type="project" value="UniProtKB"/>
</dbReference>
<dbReference type="GO" id="GO:0046904">
    <property type="term" value="F:calcium oxalate binding"/>
    <property type="evidence" value="ECO:0000303"/>
    <property type="project" value="UniProtKB"/>
</dbReference>
<dbReference type="GO" id="GO:0030246">
    <property type="term" value="F:carbohydrate binding"/>
    <property type="evidence" value="ECO:0000269"/>
    <property type="project" value="DisProt"/>
</dbReference>
<dbReference type="GO" id="GO:0020037">
    <property type="term" value="F:heme binding"/>
    <property type="evidence" value="ECO:0000314"/>
    <property type="project" value="UniProtKB"/>
</dbReference>
<dbReference type="GO" id="GO:0019862">
    <property type="term" value="F:IgA binding"/>
    <property type="evidence" value="ECO:0000314"/>
    <property type="project" value="UniProtKB"/>
</dbReference>
<dbReference type="GO" id="GO:0016491">
    <property type="term" value="F:oxidoreductase activity"/>
    <property type="evidence" value="ECO:0007669"/>
    <property type="project" value="UniProtKB-KW"/>
</dbReference>
<dbReference type="GO" id="GO:0042803">
    <property type="term" value="F:protein homodimerization activity"/>
    <property type="evidence" value="ECO:0000353"/>
    <property type="project" value="UniProtKB"/>
</dbReference>
<dbReference type="GO" id="GO:0004867">
    <property type="term" value="F:serine-type endopeptidase inhibitor activity"/>
    <property type="evidence" value="ECO:0000318"/>
    <property type="project" value="GO_Central"/>
</dbReference>
<dbReference type="GO" id="GO:0007155">
    <property type="term" value="P:cell adhesion"/>
    <property type="evidence" value="ECO:0000303"/>
    <property type="project" value="UniProtKB"/>
</dbReference>
<dbReference type="GO" id="GO:0007565">
    <property type="term" value="P:female pregnancy"/>
    <property type="evidence" value="ECO:0000303"/>
    <property type="project" value="UniProtKB"/>
</dbReference>
<dbReference type="GO" id="GO:0042167">
    <property type="term" value="P:heme catabolic process"/>
    <property type="evidence" value="ECO:0000303"/>
    <property type="project" value="UniProtKB"/>
</dbReference>
<dbReference type="GO" id="GO:0050777">
    <property type="term" value="P:negative regulation of immune response"/>
    <property type="evidence" value="ECO:0000303"/>
    <property type="project" value="UniProtKB"/>
</dbReference>
<dbReference type="GO" id="GO:0046329">
    <property type="term" value="P:negative regulation of JNK cascade"/>
    <property type="evidence" value="ECO:0000304"/>
    <property type="project" value="UniProtKB"/>
</dbReference>
<dbReference type="GO" id="GO:0030163">
    <property type="term" value="P:protein catabolic process"/>
    <property type="evidence" value="ECO:0007669"/>
    <property type="project" value="Ensembl"/>
</dbReference>
<dbReference type="CDD" id="cd22596">
    <property type="entry name" value="Kunitz_bikunin_1-like"/>
    <property type="match status" value="1"/>
</dbReference>
<dbReference type="CDD" id="cd22597">
    <property type="entry name" value="Kunitz_bikunin_2-like"/>
    <property type="match status" value="1"/>
</dbReference>
<dbReference type="CDD" id="cd19418">
    <property type="entry name" value="lipocalin_A1M-like"/>
    <property type="match status" value="1"/>
</dbReference>
<dbReference type="FunFam" id="2.40.128.20:FF:000007">
    <property type="entry name" value="Alpha-1-microglobulin/bikunin precursor"/>
    <property type="match status" value="1"/>
</dbReference>
<dbReference type="FunFam" id="4.10.410.10:FF:000005">
    <property type="entry name" value="Pancreatic trypsin inhibitor"/>
    <property type="match status" value="1"/>
</dbReference>
<dbReference type="Gene3D" id="2.40.128.20">
    <property type="match status" value="1"/>
</dbReference>
<dbReference type="Gene3D" id="4.10.410.10">
    <property type="entry name" value="Pancreatic trypsin inhibitor Kunitz domain"/>
    <property type="match status" value="2"/>
</dbReference>
<dbReference type="InterPro" id="IPR002968">
    <property type="entry name" value="A1-microglobln"/>
</dbReference>
<dbReference type="InterPro" id="IPR029856">
    <property type="entry name" value="AMBP"/>
</dbReference>
<dbReference type="InterPro" id="IPR012674">
    <property type="entry name" value="Calycin"/>
</dbReference>
<dbReference type="InterPro" id="IPR002223">
    <property type="entry name" value="Kunitz_BPTI"/>
</dbReference>
<dbReference type="InterPro" id="IPR036880">
    <property type="entry name" value="Kunitz_BPTI_sf"/>
</dbReference>
<dbReference type="InterPro" id="IPR022272">
    <property type="entry name" value="Lipocalin_CS"/>
</dbReference>
<dbReference type="InterPro" id="IPR000566">
    <property type="entry name" value="Lipocln_cytosolic_FA-bd_dom"/>
</dbReference>
<dbReference type="InterPro" id="IPR020901">
    <property type="entry name" value="Prtase_inh_Kunz-CS"/>
</dbReference>
<dbReference type="PANTHER" id="PTHR46676">
    <property type="entry name" value="PROTEIN AMBP"/>
    <property type="match status" value="1"/>
</dbReference>
<dbReference type="PANTHER" id="PTHR46676:SF1">
    <property type="entry name" value="PROTEIN AMBP"/>
    <property type="match status" value="1"/>
</dbReference>
<dbReference type="Pfam" id="PF00014">
    <property type="entry name" value="Kunitz_BPTI"/>
    <property type="match status" value="2"/>
</dbReference>
<dbReference type="Pfam" id="PF00061">
    <property type="entry name" value="Lipocalin"/>
    <property type="match status" value="1"/>
</dbReference>
<dbReference type="PRINTS" id="PR01215">
    <property type="entry name" value="A1MCGLOBULIN"/>
</dbReference>
<dbReference type="PRINTS" id="PR00759">
    <property type="entry name" value="BASICPTASE"/>
</dbReference>
<dbReference type="PRINTS" id="PR00179">
    <property type="entry name" value="LIPOCALIN"/>
</dbReference>
<dbReference type="SMART" id="SM00131">
    <property type="entry name" value="KU"/>
    <property type="match status" value="2"/>
</dbReference>
<dbReference type="SUPFAM" id="SSF57362">
    <property type="entry name" value="BPTI-like"/>
    <property type="match status" value="2"/>
</dbReference>
<dbReference type="SUPFAM" id="SSF50814">
    <property type="entry name" value="Lipocalins"/>
    <property type="match status" value="1"/>
</dbReference>
<dbReference type="PROSITE" id="PS00280">
    <property type="entry name" value="BPTI_KUNITZ_1"/>
    <property type="match status" value="2"/>
</dbReference>
<dbReference type="PROSITE" id="PS50279">
    <property type="entry name" value="BPTI_KUNITZ_2"/>
    <property type="match status" value="2"/>
</dbReference>
<dbReference type="PROSITE" id="PS00213">
    <property type="entry name" value="LIPOCALIN"/>
    <property type="match status" value="1"/>
</dbReference>
<accession>P02760</accession>
<accession>P00977</accession>
<accession>P02759</accession>
<accession>P78491</accession>
<accession>Q2TU33</accession>
<accession>Q5TBD7</accession>
<accession>Q9UC58</accession>
<accession>Q9UDI8</accession>
<name>AMBP_HUMAN</name>
<organism>
    <name type="scientific">Homo sapiens</name>
    <name type="common">Human</name>
    <dbReference type="NCBI Taxonomy" id="9606"/>
    <lineage>
        <taxon>Eukaryota</taxon>
        <taxon>Metazoa</taxon>
        <taxon>Chordata</taxon>
        <taxon>Craniata</taxon>
        <taxon>Vertebrata</taxon>
        <taxon>Euteleostomi</taxon>
        <taxon>Mammalia</taxon>
        <taxon>Eutheria</taxon>
        <taxon>Euarchontoglires</taxon>
        <taxon>Primates</taxon>
        <taxon>Haplorrhini</taxon>
        <taxon>Catarrhini</taxon>
        <taxon>Hominidae</taxon>
        <taxon>Homo</taxon>
    </lineage>
</organism>
<sequence length="352" mass="38999">MRSLGALLLLLSACLAVSAGPVPTPPDNIQVQENFNISRIYGKWYNLAIGSTCPWLKKIMDRMTVSTLVLGEGATEAEISMTSTRWRKGVCEETSGAYEKTDTDGKFLYHKSKWNITMESYVVHTNYDEYAIFLTKKFSRHHGPTITAKLYGRAPQLRETLLQDFRVVAQGVGIPEDSIFTMADRGECVPGEQEPEPILIPRVRRAVLPQEEEGSGGGQLVTEVTKKEDSCQLGYSAGPCMGMTSRYFYNGTSMACETFQYGGCMGNGNNFVTEKECLQTCRTVAACNLPIVRGPCRAFIQLWAFDAVKGKCVLFPYGGCQGNGNKFYSEKECREYCGVPGDGDEELLRFSN</sequence>
<reference key="1">
    <citation type="journal article" date="1986" name="Nucleic Acids Res.">
        <title>Sequence of a full length cDNA coding for human protein HC (alpha 1 microglobulin).</title>
        <authorList>
            <person name="Traboni C."/>
            <person name="Cortese R."/>
        </authorList>
    </citation>
    <scope>NUCLEOTIDE SEQUENCE [MRNA]</scope>
</reference>
<reference key="2">
    <citation type="journal article" date="1986" name="Nucleic Acids Res.">
        <title>The mRNA for a proteinase inhibitor related to the HI-30 domain of inter-alpha-trypsin inhibitor also encodes alpha-1-microglobulin (protein HC).</title>
        <authorList>
            <person name="Kaumeyer J.F."/>
            <person name="Polazzi J.O."/>
            <person name="Kotick M.P."/>
        </authorList>
    </citation>
    <scope>NUCLEOTIDE SEQUENCE [MRNA]</scope>
    <source>
        <tissue>Liver</tissue>
    </source>
</reference>
<reference key="3">
    <citation type="journal article" date="1990" name="Biol. Chem. Hoppe-Seyler">
        <title>Structure of the human alpha 1-microglobulin-bikunin gene.</title>
        <authorList>
            <person name="Vetr H."/>
            <person name="Gebhard W."/>
        </authorList>
    </citation>
    <scope>NUCLEOTIDE SEQUENCE [GENOMIC DNA]</scope>
</reference>
<reference key="4">
    <citation type="journal article" date="1990" name="Eur. J. Biochem.">
        <title>Structural analysis of the human inter-alpha-trypsin inhibitor light-chain gene.</title>
        <authorList>
            <person name="Diarra-Mehrpour M."/>
            <person name="Bourguignon J."/>
            <person name="Sesboue R."/>
            <person name="Salier J.-P."/>
            <person name="Leveillard T."/>
            <person name="Martin J.-P."/>
        </authorList>
    </citation>
    <scope>NUCLEOTIDE SEQUENCE [GENOMIC DNA]</scope>
    <source>
        <tissue>Liver</tissue>
    </source>
</reference>
<reference key="5">
    <citation type="submission" date="2004-02" db="EMBL/GenBank/DDBJ databases">
        <title>Identification of a human cell growth inhibition gene.</title>
        <authorList>
            <person name="Kim J.W."/>
        </authorList>
    </citation>
    <scope>NUCLEOTIDE SEQUENCE [LARGE SCALE MRNA]</scope>
</reference>
<reference key="6">
    <citation type="journal article" date="2004" name="Nat. Genet.">
        <title>Complete sequencing and characterization of 21,243 full-length human cDNAs.</title>
        <authorList>
            <person name="Ota T."/>
            <person name="Suzuki Y."/>
            <person name="Nishikawa T."/>
            <person name="Otsuki T."/>
            <person name="Sugiyama T."/>
            <person name="Irie R."/>
            <person name="Wakamatsu A."/>
            <person name="Hayashi K."/>
            <person name="Sato H."/>
            <person name="Nagai K."/>
            <person name="Kimura K."/>
            <person name="Makita H."/>
            <person name="Sekine M."/>
            <person name="Obayashi M."/>
            <person name="Nishi T."/>
            <person name="Shibahara T."/>
            <person name="Tanaka T."/>
            <person name="Ishii S."/>
            <person name="Yamamoto J."/>
            <person name="Saito K."/>
            <person name="Kawai Y."/>
            <person name="Isono Y."/>
            <person name="Nakamura Y."/>
            <person name="Nagahari K."/>
            <person name="Murakami K."/>
            <person name="Yasuda T."/>
            <person name="Iwayanagi T."/>
            <person name="Wagatsuma M."/>
            <person name="Shiratori A."/>
            <person name="Sudo H."/>
            <person name="Hosoiri T."/>
            <person name="Kaku Y."/>
            <person name="Kodaira H."/>
            <person name="Kondo H."/>
            <person name="Sugawara M."/>
            <person name="Takahashi M."/>
            <person name="Kanda K."/>
            <person name="Yokoi T."/>
            <person name="Furuya T."/>
            <person name="Kikkawa E."/>
            <person name="Omura Y."/>
            <person name="Abe K."/>
            <person name="Kamihara K."/>
            <person name="Katsuta N."/>
            <person name="Sato K."/>
            <person name="Tanikawa M."/>
            <person name="Yamazaki M."/>
            <person name="Ninomiya K."/>
            <person name="Ishibashi T."/>
            <person name="Yamashita H."/>
            <person name="Murakawa K."/>
            <person name="Fujimori K."/>
            <person name="Tanai H."/>
            <person name="Kimata M."/>
            <person name="Watanabe M."/>
            <person name="Hiraoka S."/>
            <person name="Chiba Y."/>
            <person name="Ishida S."/>
            <person name="Ono Y."/>
            <person name="Takiguchi S."/>
            <person name="Watanabe S."/>
            <person name="Yosida M."/>
            <person name="Hotuta T."/>
            <person name="Kusano J."/>
            <person name="Kanehori K."/>
            <person name="Takahashi-Fujii A."/>
            <person name="Hara H."/>
            <person name="Tanase T.-O."/>
            <person name="Nomura Y."/>
            <person name="Togiya S."/>
            <person name="Komai F."/>
            <person name="Hara R."/>
            <person name="Takeuchi K."/>
            <person name="Arita M."/>
            <person name="Imose N."/>
            <person name="Musashino K."/>
            <person name="Yuuki H."/>
            <person name="Oshima A."/>
            <person name="Sasaki N."/>
            <person name="Aotsuka S."/>
            <person name="Yoshikawa Y."/>
            <person name="Matsunawa H."/>
            <person name="Ichihara T."/>
            <person name="Shiohata N."/>
            <person name="Sano S."/>
            <person name="Moriya S."/>
            <person name="Momiyama H."/>
            <person name="Satoh N."/>
            <person name="Takami S."/>
            <person name="Terashima Y."/>
            <person name="Suzuki O."/>
            <person name="Nakagawa S."/>
            <person name="Senoh A."/>
            <person name="Mizoguchi H."/>
            <person name="Goto Y."/>
            <person name="Shimizu F."/>
            <person name="Wakebe H."/>
            <person name="Hishigaki H."/>
            <person name="Watanabe T."/>
            <person name="Sugiyama A."/>
            <person name="Takemoto M."/>
            <person name="Kawakami B."/>
            <person name="Yamazaki M."/>
            <person name="Watanabe K."/>
            <person name="Kumagai A."/>
            <person name="Itakura S."/>
            <person name="Fukuzumi Y."/>
            <person name="Fujimori Y."/>
            <person name="Komiyama M."/>
            <person name="Tashiro H."/>
            <person name="Tanigami A."/>
            <person name="Fujiwara T."/>
            <person name="Ono T."/>
            <person name="Yamada K."/>
            <person name="Fujii Y."/>
            <person name="Ozaki K."/>
            <person name="Hirao M."/>
            <person name="Ohmori Y."/>
            <person name="Kawabata A."/>
            <person name="Hikiji T."/>
            <person name="Kobatake N."/>
            <person name="Inagaki H."/>
            <person name="Ikema Y."/>
            <person name="Okamoto S."/>
            <person name="Okitani R."/>
            <person name="Kawakami T."/>
            <person name="Noguchi S."/>
            <person name="Itoh T."/>
            <person name="Shigeta K."/>
            <person name="Senba T."/>
            <person name="Matsumura K."/>
            <person name="Nakajima Y."/>
            <person name="Mizuno T."/>
            <person name="Morinaga M."/>
            <person name="Sasaki M."/>
            <person name="Togashi T."/>
            <person name="Oyama M."/>
            <person name="Hata H."/>
            <person name="Watanabe M."/>
            <person name="Komatsu T."/>
            <person name="Mizushima-Sugano J."/>
            <person name="Satoh T."/>
            <person name="Shirai Y."/>
            <person name="Takahashi Y."/>
            <person name="Nakagawa K."/>
            <person name="Okumura K."/>
            <person name="Nagase T."/>
            <person name="Nomura N."/>
            <person name="Kikuchi H."/>
            <person name="Masuho Y."/>
            <person name="Yamashita R."/>
            <person name="Nakai K."/>
            <person name="Yada T."/>
            <person name="Nakamura Y."/>
            <person name="Ohara O."/>
            <person name="Isogai T."/>
            <person name="Sugano S."/>
        </authorList>
    </citation>
    <scope>NUCLEOTIDE SEQUENCE [LARGE SCALE MRNA]</scope>
    <source>
        <tissue>Liver</tissue>
    </source>
</reference>
<reference key="7">
    <citation type="journal article" date="2004" name="Nature">
        <title>DNA sequence and analysis of human chromosome 9.</title>
        <authorList>
            <person name="Humphray S.J."/>
            <person name="Oliver K."/>
            <person name="Hunt A.R."/>
            <person name="Plumb R.W."/>
            <person name="Loveland J.E."/>
            <person name="Howe K.L."/>
            <person name="Andrews T.D."/>
            <person name="Searle S."/>
            <person name="Hunt S.E."/>
            <person name="Scott C.E."/>
            <person name="Jones M.C."/>
            <person name="Ainscough R."/>
            <person name="Almeida J.P."/>
            <person name="Ambrose K.D."/>
            <person name="Ashwell R.I.S."/>
            <person name="Babbage A.K."/>
            <person name="Babbage S."/>
            <person name="Bagguley C.L."/>
            <person name="Bailey J."/>
            <person name="Banerjee R."/>
            <person name="Barker D.J."/>
            <person name="Barlow K.F."/>
            <person name="Bates K."/>
            <person name="Beasley H."/>
            <person name="Beasley O."/>
            <person name="Bird C.P."/>
            <person name="Bray-Allen S."/>
            <person name="Brown A.J."/>
            <person name="Brown J.Y."/>
            <person name="Burford D."/>
            <person name="Burrill W."/>
            <person name="Burton J."/>
            <person name="Carder C."/>
            <person name="Carter N.P."/>
            <person name="Chapman J.C."/>
            <person name="Chen Y."/>
            <person name="Clarke G."/>
            <person name="Clark S.Y."/>
            <person name="Clee C.M."/>
            <person name="Clegg S."/>
            <person name="Collier R.E."/>
            <person name="Corby N."/>
            <person name="Crosier M."/>
            <person name="Cummings A.T."/>
            <person name="Davies J."/>
            <person name="Dhami P."/>
            <person name="Dunn M."/>
            <person name="Dutta I."/>
            <person name="Dyer L.W."/>
            <person name="Earthrowl M.E."/>
            <person name="Faulkner L."/>
            <person name="Fleming C.J."/>
            <person name="Frankish A."/>
            <person name="Frankland J.A."/>
            <person name="French L."/>
            <person name="Fricker D.G."/>
            <person name="Garner P."/>
            <person name="Garnett J."/>
            <person name="Ghori J."/>
            <person name="Gilbert J.G.R."/>
            <person name="Glison C."/>
            <person name="Grafham D.V."/>
            <person name="Gribble S."/>
            <person name="Griffiths C."/>
            <person name="Griffiths-Jones S."/>
            <person name="Grocock R."/>
            <person name="Guy J."/>
            <person name="Hall R.E."/>
            <person name="Hammond S."/>
            <person name="Harley J.L."/>
            <person name="Harrison E.S.I."/>
            <person name="Hart E.A."/>
            <person name="Heath P.D."/>
            <person name="Henderson C.D."/>
            <person name="Hopkins B.L."/>
            <person name="Howard P.J."/>
            <person name="Howden P.J."/>
            <person name="Huckle E."/>
            <person name="Johnson C."/>
            <person name="Johnson D."/>
            <person name="Joy A.A."/>
            <person name="Kay M."/>
            <person name="Keenan S."/>
            <person name="Kershaw J.K."/>
            <person name="Kimberley A.M."/>
            <person name="King A."/>
            <person name="Knights A."/>
            <person name="Laird G.K."/>
            <person name="Langford C."/>
            <person name="Lawlor S."/>
            <person name="Leongamornlert D.A."/>
            <person name="Leversha M."/>
            <person name="Lloyd C."/>
            <person name="Lloyd D.M."/>
            <person name="Lovell J."/>
            <person name="Martin S."/>
            <person name="Mashreghi-Mohammadi M."/>
            <person name="Matthews L."/>
            <person name="McLaren S."/>
            <person name="McLay K.E."/>
            <person name="McMurray A."/>
            <person name="Milne S."/>
            <person name="Nickerson T."/>
            <person name="Nisbett J."/>
            <person name="Nordsiek G."/>
            <person name="Pearce A.V."/>
            <person name="Peck A.I."/>
            <person name="Porter K.M."/>
            <person name="Pandian R."/>
            <person name="Pelan S."/>
            <person name="Phillimore B."/>
            <person name="Povey S."/>
            <person name="Ramsey Y."/>
            <person name="Rand V."/>
            <person name="Scharfe M."/>
            <person name="Sehra H.K."/>
            <person name="Shownkeen R."/>
            <person name="Sims S.K."/>
            <person name="Skuce C.D."/>
            <person name="Smith M."/>
            <person name="Steward C.A."/>
            <person name="Swarbreck D."/>
            <person name="Sycamore N."/>
            <person name="Tester J."/>
            <person name="Thorpe A."/>
            <person name="Tracey A."/>
            <person name="Tromans A."/>
            <person name="Thomas D.W."/>
            <person name="Wall M."/>
            <person name="Wallis J.M."/>
            <person name="West A.P."/>
            <person name="Whitehead S.L."/>
            <person name="Willey D.L."/>
            <person name="Williams S.A."/>
            <person name="Wilming L."/>
            <person name="Wray P.W."/>
            <person name="Young L."/>
            <person name="Ashurst J.L."/>
            <person name="Coulson A."/>
            <person name="Blocker H."/>
            <person name="Durbin R.M."/>
            <person name="Sulston J.E."/>
            <person name="Hubbard T."/>
            <person name="Jackson M.J."/>
            <person name="Bentley D.R."/>
            <person name="Beck S."/>
            <person name="Rogers J."/>
            <person name="Dunham I."/>
        </authorList>
    </citation>
    <scope>NUCLEOTIDE SEQUENCE [LARGE SCALE GENOMIC DNA]</scope>
</reference>
<reference key="8">
    <citation type="submission" date="2005-07" db="EMBL/GenBank/DDBJ databases">
        <authorList>
            <person name="Mural R.J."/>
            <person name="Istrail S."/>
            <person name="Sutton G.G."/>
            <person name="Florea L."/>
            <person name="Halpern A.L."/>
            <person name="Mobarry C.M."/>
            <person name="Lippert R."/>
            <person name="Walenz B."/>
            <person name="Shatkay H."/>
            <person name="Dew I."/>
            <person name="Miller J.R."/>
            <person name="Flanigan M.J."/>
            <person name="Edwards N.J."/>
            <person name="Bolanos R."/>
            <person name="Fasulo D."/>
            <person name="Halldorsson B.V."/>
            <person name="Hannenhalli S."/>
            <person name="Turner R."/>
            <person name="Yooseph S."/>
            <person name="Lu F."/>
            <person name="Nusskern D.R."/>
            <person name="Shue B.C."/>
            <person name="Zheng X.H."/>
            <person name="Zhong F."/>
            <person name="Delcher A.L."/>
            <person name="Huson D.H."/>
            <person name="Kravitz S.A."/>
            <person name="Mouchard L."/>
            <person name="Reinert K."/>
            <person name="Remington K.A."/>
            <person name="Clark A.G."/>
            <person name="Waterman M.S."/>
            <person name="Eichler E.E."/>
            <person name="Adams M.D."/>
            <person name="Hunkapiller M.W."/>
            <person name="Myers E.W."/>
            <person name="Venter J.C."/>
        </authorList>
    </citation>
    <scope>NUCLEOTIDE SEQUENCE [LARGE SCALE GENOMIC DNA]</scope>
</reference>
<reference key="9">
    <citation type="journal article" date="2004" name="Genome Res.">
        <title>The status, quality, and expansion of the NIH full-length cDNA project: the Mammalian Gene Collection (MGC).</title>
        <authorList>
            <consortium name="The MGC Project Team"/>
        </authorList>
    </citation>
    <scope>NUCLEOTIDE SEQUENCE [LARGE SCALE MRNA]</scope>
    <source>
        <tissue>Liver</tissue>
    </source>
</reference>
<reference key="10">
    <citation type="journal article" date="1984" name="Arch. Biochem. Biophys.">
        <title>The complete amino acid sequence of human complex-forming glycoprotein heterogeneous in charge (protein HC) from one individual.</title>
        <authorList>
            <person name="Lopez C."/>
            <person name="Grubb A.O."/>
            <person name="Mendez E."/>
        </authorList>
    </citation>
    <scope>PROTEIN SEQUENCE OF 20-202</scope>
</reference>
<reference key="11">
    <citation type="journal article" date="1981" name="Biochem. Biophys. Res. Commun.">
        <title>Complete amino acid sequence of human alpha 1-microglobulin.</title>
        <authorList>
            <person name="Takagi T."/>
            <person name="Takagi K."/>
            <person name="Kawai T."/>
        </authorList>
    </citation>
    <scope>PROTEIN SEQUENCE OF 20-198</scope>
</reference>
<reference key="12">
    <citation type="journal article" date="1982" name="FEBS Lett.">
        <title>Human protein HC displays variability in its carboxyl-terminal amino acid sequence.</title>
        <authorList>
            <person name="Lopez C."/>
            <person name="Grubb A.O."/>
            <person name="Mendez E."/>
        </authorList>
    </citation>
    <scope>PROTEIN SEQUENCE OF 20-198</scope>
</reference>
<reference key="13">
    <citation type="journal article" date="1994" name="J. Biol. Chem.">
        <title>Location of a novel type of interpolypeptide chain linkage in the human protein HC-IgA complex (HC-IgA) and identification of a heterogeneous chromophore associated with the complex.</title>
        <authorList>
            <person name="Calero M."/>
            <person name="Escribano J."/>
            <person name="Grubb A."/>
            <person name="Mendez E."/>
        </authorList>
    </citation>
    <scope>PROTEIN SEQUENCE OF 44-57</scope>
    <scope>BINDING TO CHROMOPHORE</scope>
</reference>
<reference key="14">
    <citation type="journal article" date="1985" name="Biol. Chem. Hoppe-Seyler">
        <title>Human inter-alpha-trypsin inhibitor: localization of the Kunitz-type domains in the N-terminal part of the molecule and their release by a trypsin-like proteinase.</title>
        <authorList>
            <person name="Reisinger P."/>
            <person name="Hochstrasser K."/>
            <person name="Albrecht G.J."/>
            <person name="Lempart K."/>
            <person name="Salier J.-P."/>
        </authorList>
    </citation>
    <scope>PROTEIN SEQUENCE OF 206-350</scope>
</reference>
<reference key="15">
    <citation type="journal article" date="1992" name="J. Cell. Biochem.">
        <title>Cancer-related urinary proteinase inhibitor, EDC1: a new method for its isolation and evidence for multiple forms.</title>
        <authorList>
            <person name="Chawla R.K."/>
            <person name="Lawson D.H."/>
            <person name="Ahmad M."/>
            <person name="Travis J."/>
        </authorList>
    </citation>
    <scope>PROTEIN SEQUENCE OF 206-243 AND 275-303</scope>
    <source>
        <tissue>Urine</tissue>
    </source>
</reference>
<reference key="16">
    <citation type="journal article" date="1991" name="J. Biol. Chem.">
        <title>Chondroitin 4-sulfate covalently cross-links the chains of the human blood protein pre-alpha-inhibitor.</title>
        <authorList>
            <person name="Enghild J.J."/>
            <person name="Salvesen G."/>
            <person name="Hefta S.A."/>
            <person name="Thoegersen I.B."/>
            <person name="Rutherfurd S."/>
            <person name="Pizzo S.V."/>
        </authorList>
    </citation>
    <scope>PROTEIN SEQUENCE OF 206-223</scope>
    <scope>GLYCOSYLATION AT SER-215</scope>
    <scope>CROSS-LINK SITE TO HC3</scope>
</reference>
<reference key="17">
    <citation type="journal article" date="1993" name="J. Biol. Chem.">
        <title>Presence of the protein-glycosaminoglycan-protein covalent cross-link in the inter-alpha-inhibitor-related proteinase inhibitor heavy chain 2/bikunin.</title>
        <authorList>
            <person name="Enghild J.J."/>
            <person name="Salvesen G."/>
            <person name="Thoegersen I.B."/>
            <person name="Valnickova Z."/>
            <person name="Pizzo S.V."/>
            <person name="Hefta S.A."/>
        </authorList>
    </citation>
    <scope>PROTEIN SEQUENCE OF 206-223</scope>
    <scope>GLYCOSYLATION AT SER-215</scope>
    <scope>CROSS-LINK SITE TO HC2</scope>
</reference>
<reference key="18">
    <citation type="journal article" date="1995" name="Urol. Res.">
        <title>Characterization of uronic-acid-rich inhibitor of calcium oxalate crystallization isolated from rat urine.</title>
        <authorList>
            <person name="Atmani F."/>
            <person name="Khan S.R."/>
        </authorList>
    </citation>
    <scope>PROTEIN SEQUENCE OF 206-223</scope>
    <scope>FUNCTION</scope>
    <source>
        <tissue>Urine</tissue>
    </source>
</reference>
<reference key="19">
    <citation type="journal article" date="1994" name="Eur. J. Biochem.">
        <title>Chondroitin sulphate covalently cross-links the three polypeptide chains of inter-alpha-trypsin inhibitor.</title>
        <authorList>
            <person name="Morelle W."/>
            <person name="Capon C."/>
            <person name="Balduyck M."/>
            <person name="Sautiere P."/>
            <person name="Kouach M."/>
            <person name="Michalski C."/>
            <person name="Fournet B."/>
            <person name="Mizon J."/>
        </authorList>
    </citation>
    <scope>PROTEIN SEQUENCE OF 206-219</scope>
    <scope>COVALENT LINKAGE WITH CHONDROITIN SULFATE</scope>
    <source>
        <tissue>Plasma</tissue>
    </source>
</reference>
<reference key="20">
    <citation type="journal article" date="1981" name="Hoppe-Seyler's Z. Physiol. Chem.">
        <title>Kunitz-type proteinase inhibitors derived by limited proteolysis of the inter-alpha-trypsin inhibitor, V. Attachments of carbohydrates in the human urinary trypsin inhibitor isolated by affinity chromatography.</title>
        <authorList>
            <person name="Hochstrasser K."/>
            <person name="Schoenberger O.L."/>
            <person name="Rossmanith I."/>
            <person name="Wachter E."/>
        </authorList>
    </citation>
    <scope>GLYCOSYLATION AT SER-215 AND ASN-250</scope>
    <scope>STRUCTURE OF CARBOHYDRATES</scope>
</reference>
<reference key="21">
    <citation type="journal article" date="1985" name="Biol. Chem. Hoppe-Seyler">
        <title>The reactive site of human inter-alpha-trypsin inhibitor is in the amino-terminal half of the protein.</title>
        <authorList>
            <person name="Morii M."/>
            <person name="Travis J."/>
        </authorList>
    </citation>
    <scope>INHIBITORY SITE</scope>
</reference>
<reference key="22">
    <citation type="journal article" date="1989" name="J. Biol. Chem.">
        <title>Analysis of inter-alpha-trypsin inhibitor and a novel trypsin inhibitor, pre-alpha-trypsin inhibitor, from human plasma. Polypeptide chain stoichiometry and assembly by glycan.</title>
        <authorList>
            <person name="Enghild J.J."/>
            <person name="Thoegersen I.B."/>
            <person name="Pizzo S.V."/>
            <person name="Salvesen G."/>
        </authorList>
    </citation>
    <scope>IDENTIFICATION IN INTER-ALPHA-INHIBITOR AND PRE-ALPHA-INHIBITOR COMPLEXES</scope>
    <scope>IDENTIFICATION BY MASS SPECTROMETRY</scope>
</reference>
<reference key="23">
    <citation type="journal article" date="1990" name="FEBS Lett.">
        <title>Location and characterization of the three carbohydrate prosthetic groups of human protein HC.</title>
        <authorList>
            <person name="Escribano J."/>
            <person name="Lopex-Otin C."/>
            <person name="Hjerpe A."/>
            <person name="Grubb A.O."/>
            <person name="Mendez E."/>
        </authorList>
    </citation>
    <scope>GLYCOSYLATION AT THR-24; ASN-36 AND ASN-115</scope>
    <scope>STRUCTURE OF CARBOHYDRATES</scope>
</reference>
<reference key="24">
    <citation type="journal article" date="1991" name="J. Biol. Chem.">
        <title>The protein HC chromophore is linked to the cysteine residue at position 34 of the polypeptide chain by a reduction-resistant bond and causes the charge heterogeneity of protein HC.</title>
        <authorList>
            <person name="Escribano J."/>
            <person name="Grubb A.O."/>
            <person name="Calero M."/>
            <person name="Mendez E."/>
        </authorList>
    </citation>
    <scope>BINDING OF CHROMOPHORE AT CYS-53</scope>
    <scope>IDENTIFICATION BY MASS SPECTROMETRY</scope>
    <source>
        <tissue>Urine</tissue>
    </source>
</reference>
<reference key="25">
    <citation type="journal article" date="1995" name="FEBS Lett.">
        <title>Formation of the alpha 1-microglobulin chromophore in mammalian and insect cells: a novel post-translational mechanism?</title>
        <authorList>
            <person name="Akerstroem B."/>
            <person name="Bratt T."/>
            <person name="Enghild J.J."/>
        </authorList>
    </citation>
    <scope>BINDING TO CHROMOPHORE</scope>
</reference>
<reference key="26">
    <citation type="journal article" date="1997" name="Eur. J. Biochem.">
        <title>Prothrombin, albumin and immunoglobulin A form covalent complexes with alpha1-microglobulin in human plasma.</title>
        <authorList>
            <person name="Berggaard T."/>
            <person name="Thelin N."/>
            <person name="Falkenberg C."/>
            <person name="Enghild J.J."/>
            <person name="Akerstroem B."/>
        </authorList>
    </citation>
    <scope>SUBUNIT</scope>
    <scope>INTERACTION WITH F2; ALB AND IMMUNOGLOBULIN A</scope>
</reference>
<reference key="27">
    <citation type="journal article" date="1999" name="J. Biol. Chem.">
        <title>Generation of catalytically active granzyme K from Escherichia coli inclusion bodies and identification of efficient granzyme K inhibitors in human plasma.</title>
        <authorList>
            <person name="Wilharm E."/>
            <person name="Parry M.A."/>
            <person name="Friebel R."/>
            <person name="Tschesche H."/>
            <person name="Matschiner G."/>
            <person name="Sommerhoff C.P."/>
            <person name="Jenne D.E."/>
        </authorList>
    </citation>
    <scope>FUNCTION</scope>
</reference>
<reference key="28">
    <citation type="journal article" date="1999" name="Protein Sci.">
        <title>Alpha1-microglobulin chromophores are located to three lysine residues semiburied in the lipocalin pocket and associated with a novel lipophilic compound.</title>
        <authorList>
            <person name="Berggaard T."/>
            <person name="Cohen A."/>
            <person name="Persson P."/>
            <person name="Lindqvist A."/>
            <person name="Cedervall T."/>
            <person name="Silow M."/>
            <person name="Thoegersen I.B."/>
            <person name="Joensson J.A."/>
            <person name="Enghild J.J."/>
            <person name="Aakerstroem B."/>
        </authorList>
    </citation>
    <scope>BINDING OF CHROMOPHORE AT LYS-111; LYS-137 AND LYS-149</scope>
</reference>
<reference key="29">
    <citation type="journal article" date="2002" name="Blood">
        <title>Processing of the lipocalin alpha(1)-microglobulin by hemoglobin induces heme-binding and heme-degradation properties.</title>
        <authorList>
            <person name="Allhorn M."/>
            <person name="Berggaard T."/>
            <person name="Nordberg J."/>
            <person name="Olsson M.L."/>
            <person name="Akerstroem B."/>
        </authorList>
    </citation>
    <scope>FUNCTION</scope>
    <scope>SUBCELLULAR LOCATION</scope>
    <scope>PROTEOLYTIC CLEAVAGE</scope>
    <scope>TISSUE SPECIFICITY</scope>
</reference>
<reference key="30">
    <citation type="journal article" date="2004" name="J. Biol. Chem.">
        <title>Human alpha-1-microglobulin is covalently bound to kynurenine-derived chromophores.</title>
        <authorList>
            <person name="Sala A."/>
            <person name="Campagnoli M."/>
            <person name="Perani E."/>
            <person name="Romano A."/>
            <person name="Labo S."/>
            <person name="Monzani E."/>
            <person name="Minchiotti L."/>
            <person name="Galliano M."/>
        </authorList>
    </citation>
    <scope>CHROMOPHORE CHARACTERIZATION</scope>
</reference>
<reference key="31">
    <citation type="journal article" date="2004" name="J. Biol. Chem.">
        <title>The ORF3 protein of hepatitis E virus interacts with liver-specific alpha1-microglobulin and its precursor alpha1-microglobulin/bikunin precursor (AMBP) and expedites their export from the hepatocyte.</title>
        <authorList>
            <person name="Tyagi S."/>
            <person name="Surjit M."/>
            <person name="Roy A.K."/>
            <person name="Jameel S."/>
            <person name="Lal S.K."/>
        </authorList>
    </citation>
    <scope>INTERACTION OF ALPHA-1-MICROGLOBULIN WITH HEV PROTEIN ORF3 (MICROBIAL INFECTION)</scope>
</reference>
<reference key="32">
    <citation type="journal article" date="2005" name="Free Radic. Biol. Med.">
        <title>Redox properties of the lipocalin alpha1-microglobulin: reduction of cytochrome c, hemoglobin, and free iron.</title>
        <authorList>
            <person name="Allhorn M."/>
            <person name="Klapyta A."/>
            <person name="Akerstroem B."/>
        </authorList>
    </citation>
    <scope>FUNCTION</scope>
    <scope>BIOPHYSICOCHEMICAL PROPERTIES</scope>
    <scope>MUTAGENESIS OF CYS-53; LYS-111; LYS-137 AND LYS-149</scope>
    <scope>PROTEOLYTIC CLEAVAGE</scope>
</reference>
<reference key="33">
    <citation type="journal article" date="2005" name="J. Biol. Chem.">
        <title>Characterization of the interaction between tumor necrosis factor-stimulated gene-6 and heparin: implications for the inhibition of plasmin in extracellular matrix microenvironments.</title>
        <authorList>
            <person name="Mahoney D.J."/>
            <person name="Mulloy B."/>
            <person name="Forster M.J."/>
            <person name="Blundell C.D."/>
            <person name="Fries E."/>
            <person name="Milner C.M."/>
            <person name="Day A.J."/>
        </authorList>
    </citation>
    <scope>FUNCTION</scope>
    <scope>ACTIVITY REGULATION</scope>
    <scope>INTERACTION WITH TNFAIP6</scope>
</reference>
<reference key="34">
    <citation type="journal article" date="2005" name="J. Virol.">
        <title>The 41-amino-acid C-terminal region of the hepatitis E virus ORF3 protein interacts with bikunin, a Kunitz-type serine protease inhibitor.</title>
        <authorList>
            <person name="Tyagi S."/>
            <person name="Surjit M."/>
            <person name="Lal S.K."/>
        </authorList>
    </citation>
    <scope>INTERACTION OF BIKUNIN WITH HEV PROTEIN ORF3 (MICROBIAL INFECTION)</scope>
</reference>
<reference key="35">
    <citation type="journal article" date="2007" name="Am. J. Respir. Cell Mol. Biol.">
        <title>TSG-6 potentiates the antitissue kallikrein activity of inter-alpha-inhibitor through bikunin release.</title>
        <authorList>
            <person name="Forteza R."/>
            <person name="Casalino-Matsuda S.M."/>
            <person name="Monzon M.E."/>
            <person name="Fries E."/>
            <person name="Rugg M.S."/>
            <person name="Milner C.M."/>
            <person name="Day A.J."/>
        </authorList>
    </citation>
    <scope>FUNCTION</scope>
    <scope>ACTIVITY REGULATION</scope>
    <scope>SUBUNIT</scope>
    <scope>TISSUE SPECIFICITY</scope>
    <scope>INDUCTION BY TNF</scope>
</reference>
<reference key="36">
    <citation type="journal article" date="2010" name="J. Biol. Chem.">
        <title>The TSG-6/HC2-mediated transfer is a dynamic process shuffling heavy chains between glycosaminoglycans.</title>
        <authorList>
            <person name="Sanggaard K.W."/>
            <person name="Scavenius C."/>
            <person name="Rasmussen A.J."/>
            <person name="Wisniewski H.G."/>
            <person name="Thoegersen I.B."/>
            <person name="Enghild J.J."/>
        </authorList>
    </citation>
    <scope>FUNCTION</scope>
</reference>
<reference key="37">
    <citation type="journal article" date="2011" name="Placenta">
        <title>Perfusion of human placenta with hemoglobin introduces preeclampsia-like injuries that are prevented by alpha1-microglobulin.</title>
        <authorList>
            <person name="May K."/>
            <person name="Rosenloef L."/>
            <person name="Olsson M.G."/>
            <person name="Centlow M."/>
            <person name="Moergelin M."/>
            <person name="Larsson I."/>
            <person name="Cederlund M."/>
            <person name="Rutardottir S."/>
            <person name="Siegmund W."/>
            <person name="Schneider H."/>
            <person name="Akerstroem B."/>
            <person name="Hansson S.R."/>
        </authorList>
    </citation>
    <scope>FUNCTION</scope>
    <scope>TISSUE SPECIFICITY</scope>
    <scope>INDUCTION BY OXIDATIVE STRESS</scope>
</reference>
<reference key="38">
    <citation type="journal article" date="2011" name="PLoS ONE">
        <title>Up-regulation of A1M/alpha1-microglobulin in skin by heme and reactive oxygen species gives protection from oxidative damage.</title>
        <authorList>
            <person name="Olsson M.G."/>
            <person name="Allhorn M."/>
            <person name="Larsson J."/>
            <person name="Cederlund M."/>
            <person name="Lundqvist K."/>
            <person name="Schmidtchen A."/>
            <person name="Soerensen O.E."/>
            <person name="Moergelin M."/>
            <person name="Akerstroem B."/>
        </authorList>
    </citation>
    <scope>FUNCTION</scope>
    <scope>TISSUE SPECIFICITY</scope>
    <scope>INDUCTION BY OXIDATIVE STRESS</scope>
    <scope>SUBCELLULAR LOCATION</scope>
</reference>
<reference key="39">
    <citation type="journal article" date="2012" name="Mol. Cell. Proteomics">
        <title>Human urinary glycoproteomics; attachment site specific analysis of N- and O-linked glycosylations by CID and ECD.</title>
        <authorList>
            <person name="Halim A."/>
            <person name="Nilsson J."/>
            <person name="Ruetschi U."/>
            <person name="Hesse C."/>
            <person name="Larson G."/>
        </authorList>
    </citation>
    <scope>GLYCOSYLATION AT ASN-115 AND ASN-250</scope>
    <scope>STRUCTURE OF CARBOHYDRATES</scope>
    <scope>IDENTIFICATION BY MASS SPECTROMETRY</scope>
</reference>
<reference key="40">
    <citation type="journal article" date="2013" name="Antioxid. Redox Signal.">
        <title>The radical-binding lipocalin A1M binds to a Complex I subunit and protects mitochondrial structure and function.</title>
        <authorList>
            <person name="Olsson M.G."/>
            <person name="Rosenloef L.W."/>
            <person name="Kotarsky H."/>
            <person name="Olofsson T."/>
            <person name="Leanderson T."/>
            <person name="Moergelin M."/>
            <person name="Fellman V."/>
            <person name="Aakerstroem B."/>
        </authorList>
    </citation>
    <scope>FUNCTION</scope>
    <scope>SUBCELLULAR LOCATION</scope>
    <scope>INTERACTION WITH NDUFAB1</scope>
</reference>
<reference key="41">
    <citation type="journal article" date="2013" name="Free Radic. Res.">
        <title>The cysteine 34 residue of A1M/alpha1-microglobulin is essential for protection of irradiated cell cultures and reduction of carbonyl groups.</title>
        <authorList>
            <person name="Rutardottir S."/>
            <person name="Nilsson E.J."/>
            <person name="Pallon J."/>
            <person name="Gram M."/>
            <person name="Aakerstroem B."/>
        </authorList>
    </citation>
    <scope>FUNCTION</scope>
    <scope>INDUCTION BY OXIDATIVE STRESS</scope>
    <scope>MUTAGENESIS OF CYS-53; LYS-111; LYS-137 AND LYS-149</scope>
    <scope>IDENTIFICATION BY MASS SPECTROMETRY</scope>
</reference>
<reference key="42">
    <citation type="journal article" date="2014" name="J. Biol. Chem.">
        <title>Sequence and conformational specificity in substrate recognition: several human Kunitz protease inhibitor domains are specific substrates of mesotrypsin.</title>
        <authorList>
            <person name="Pendlebury D."/>
            <person name="Wang R."/>
            <person name="Henin R.D."/>
            <person name="Hockla A."/>
            <person name="Soares A.S."/>
            <person name="Madden B.J."/>
            <person name="Kazanov M.D."/>
            <person name="Radisky E.S."/>
        </authorList>
    </citation>
    <scope>FUNCTION</scope>
    <scope>PROTEOLYTIC CLEAVAGE</scope>
    <scope>DOMAIN</scope>
</reference>
<reference key="43">
    <citation type="journal article" date="2014" name="J. Proteomics">
        <title>An enzyme assisted RP-RPLC approach for in-depth analysis of human liver phosphoproteome.</title>
        <authorList>
            <person name="Bian Y."/>
            <person name="Song C."/>
            <person name="Cheng K."/>
            <person name="Dong M."/>
            <person name="Wang F."/>
            <person name="Huang J."/>
            <person name="Sun D."/>
            <person name="Wang L."/>
            <person name="Ye M."/>
            <person name="Zou H."/>
        </authorList>
    </citation>
    <scope>IDENTIFICATION BY MASS SPECTROMETRY [LARGE SCALE ANALYSIS]</scope>
    <source>
        <tissue>Liver</tissue>
    </source>
</reference>
<reference key="44">
    <citation type="journal article" date="2015" name="Front. Physiol.">
        <title>A1M/alpha1-microglobulin is proteolytically activated by myeloperoxidase, binds its heme group and inhibits low density lipoprotein oxidation.</title>
        <authorList>
            <person name="Cederlund M."/>
            <person name="Deronic A."/>
            <person name="Pallon J."/>
            <person name="Soerensen O.E."/>
            <person name="Aakerstroem B."/>
        </authorList>
    </citation>
    <scope>FUNCTION</scope>
    <scope>PROTEOLYTIC CLEAVAGE</scope>
</reference>
<reference key="45">
    <citation type="journal article" date="2015" name="Mol. Cell. Proteomics">
        <title>Identification of chondroitin sulfate linkage region glycopeptides reveals prohormones as a novel class of proteoglycans.</title>
        <authorList>
            <person name="Noborn F."/>
            <person name="Gomez Toledo A."/>
            <person name="Sihlbom C."/>
            <person name="Lengqvist J."/>
            <person name="Fries E."/>
            <person name="Kjellen L."/>
            <person name="Nilsson J."/>
            <person name="Larson G."/>
        </authorList>
    </citation>
    <scope>SUBCELLULAR LOCATION</scope>
    <scope>TISSUE SPECIFICITY</scope>
    <scope>GLYCOSYLATION AT SER-215</scope>
</reference>
<reference key="46">
    <citation type="journal article" date="2020" name="Glycobiology">
        <title>An affinity chromatography and glycoproteomics workflow to profile the chondroitin sulfate proteoglycans that interact with malarial VAR2CSA in the placenta and in cancer.</title>
        <authorList>
            <person name="Toledo A.G."/>
            <person name="Pihl J."/>
            <person name="Spliid C.B."/>
            <person name="Persson A."/>
            <person name="Nilsson J."/>
            <person name="Pereira M.A."/>
            <person name="Gustavsson T."/>
            <person name="Choudhary S."/>
            <person name="Oo H.Z."/>
            <person name="Black P.C."/>
            <person name="Daugaard M."/>
            <person name="Esko J.D."/>
            <person name="Larson G."/>
            <person name="Salanti A."/>
            <person name="Clausen T.M."/>
        </authorList>
    </citation>
    <scope>TISSUE SPECIFICITY</scope>
    <scope>GLYCOSYLATION AT SER-215</scope>
</reference>
<reference key="47">
    <citation type="journal article" date="2020" name="Int. J. Mol. Sci.">
        <title>alpha1-Microglobulin (A1M) Protects Human Proximal Tubule Epithelial Cells from Heme-Induced Damage In Vitro.</title>
        <authorList>
            <person name="Kristiansson A."/>
            <person name="Davidsson S."/>
            <person name="Johansson M.E."/>
            <person name="Piel S."/>
            <person name="Elmer E."/>
            <person name="Hansson M.J."/>
            <person name="Aakerstroem B."/>
            <person name="Gram M."/>
        </authorList>
    </citation>
    <scope>FUNCTION</scope>
</reference>
<reference key="48">
    <citation type="journal article" date="2021" name="Free Radic. Biol. Med.">
        <title>Human radical scavenger alpha1-microglobulin protects against hemolysis in vitro and alpha1-microglobulin knockout mice exhibit a macrocytic anemia phenotype.</title>
        <authorList>
            <person name="Kristiansson A."/>
            <person name="Bergwik J."/>
            <person name="Alattar A.G."/>
            <person name="Flygare J."/>
            <person name="Gram M."/>
            <person name="Hansson S.R."/>
            <person name="Olsson M.L."/>
            <person name="Storry J.R."/>
            <person name="Allhorn M."/>
            <person name="Aakerstroem B."/>
        </authorList>
    </citation>
    <scope>FUNCTION</scope>
    <scope>SUBCELLULAR LOCATION</scope>
    <scope>TISSUE SPECIFICITY</scope>
</reference>
<reference key="49">
    <citation type="journal article" date="2022" name="J. Proteins Proteom.">
        <title>Mass spectrometric analysis of chondroitin sulfate-linked peptides.</title>
        <authorList>
            <person name="Ramarajan M.G."/>
            <person name="Saraswat M."/>
            <person name="Budhraja R."/>
            <person name="Garapati K."/>
            <person name="Raymond K."/>
            <person name="Pandey A."/>
        </authorList>
    </citation>
    <scope>SUBCELLULAR LOCATION</scope>
    <scope>TISSUE SPECIFICITY</scope>
    <scope>GLYCOSYLATION AT SER-215</scope>
</reference>
<reference key="50">
    <citation type="journal article" date="2023" name="Mol. Cell. Proteomics">
        <title>Mapping the Human Chondroitin Sulfate Glycoproteome Reveals an Unexpected Correlation Between Glycan Sulfation and Attachment Site Characteristics.</title>
        <authorList>
            <person name="Noborn F."/>
            <person name="Nilsson J."/>
            <person name="Sihlbom C."/>
            <person name="Nikpour M."/>
            <person name="Kjellen L."/>
            <person name="Larson G."/>
        </authorList>
    </citation>
    <scope>SUBCELLULAR LOCATION</scope>
    <scope>TISSUE SPECIFICITY</scope>
    <scope>GLYCOSYLATION AT SER-215</scope>
</reference>
<reference key="51">
    <citation type="journal article" date="1998" name="J. Mol. Biol.">
        <title>The crystal structure of bikunin from the inter-alpha-inhibitor complex: a serine protease inhibitor with two Kunitz domains.</title>
        <authorList>
            <person name="Xu Y."/>
            <person name="Carr P.D."/>
            <person name="Guss J.M."/>
            <person name="Ollis D.L."/>
        </authorList>
    </citation>
    <scope>X-RAY CRYSTALLOGRAPHY (2.5 ANGSTROMS) OF 206-352</scope>
    <scope>DISULFIDE BOND</scope>
</reference>
<reference key="52">
    <citation type="journal article" date="2012" name="Biochem. J.">
        <title>The crystal structure of human alpha(1)-microglobulin reveals a potential haem-binding site.</title>
        <authorList>
            <person name="Meining W."/>
            <person name="Skerra A."/>
        </authorList>
    </citation>
    <scope>X-RAY CRYSTALLOGRAPHY (2.30 ANGSTROMS) OF 20-202</scope>
    <scope>DISULFIDE BOND</scope>
    <scope>SUBUNIT</scope>
</reference>
<reference key="53">
    <citation type="journal article" date="2000" name="Biochim. Biophys. Acta">
        <title>Alpha(1)-microglobulin: a yellow-brown lipocalin.</title>
        <authorList>
            <person name="Aakerstroem B."/>
            <person name="Loegdberg L."/>
            <person name="Berggaard T."/>
            <person name="Osmark P."/>
            <person name="Lindqvist A."/>
        </authorList>
    </citation>
    <scope>REVIEW</scope>
</reference>
<gene>
    <name type="primary">AMBP</name>
    <name type="synonym">HCP</name>
    <name type="synonym">ITIL</name>
</gene>
<feature type="signal peptide" evidence="32 34 40">
    <location>
        <begin position="1"/>
        <end position="19"/>
    </location>
</feature>
<feature type="chain" id="PRO_0000017886" description="Alpha-1-microglobulin">
    <location>
        <begin position="20"/>
        <end position="203"/>
    </location>
</feature>
<feature type="chain" id="PRO_0000017887" description="Inter-alpha-trypsin inhibitor light chain">
    <location>
        <begin position="206"/>
        <end position="352"/>
    </location>
</feature>
<feature type="chain" id="PRO_0000318926" description="Trypstatin" evidence="1">
    <location>
        <begin position="284"/>
        <end position="344"/>
    </location>
</feature>
<feature type="domain" description="BPTI/Kunitz inhibitor 1" evidence="4">
    <location>
        <begin position="231"/>
        <end position="281"/>
    </location>
</feature>
<feature type="domain" description="BPTI/Kunitz inhibitor 2" evidence="4">
    <location>
        <begin position="287"/>
        <end position="337"/>
    </location>
</feature>
<feature type="region of interest" description="Glycopeptide (secretory piece)">
    <location>
        <begin position="206"/>
        <end position="226"/>
    </location>
</feature>
<feature type="binding site" description="covalent" evidence="14">
    <location>
        <position position="53"/>
    </location>
    <ligand>
        <name>3-hydroxy-L-kynurenine</name>
        <dbReference type="ChEBI" id="CHEBI:58125"/>
        <note>multimeric 3-hydroxykynurenine chromophore</note>
    </ligand>
</feature>
<feature type="binding site" description="covalent" evidence="6">
    <location>
        <position position="111"/>
    </location>
    <ligand>
        <name>3-hydroxy-L-kynurenine</name>
        <dbReference type="ChEBI" id="CHEBI:58125"/>
        <note>multimeric 3-hydroxykynurenine chromophore</note>
    </ligand>
</feature>
<feature type="binding site" description="covalent" evidence="6">
    <location>
        <position position="137"/>
    </location>
    <ligand>
        <name>3-hydroxy-L-kynurenine</name>
        <dbReference type="ChEBI" id="CHEBI:58125"/>
        <note>multimeric 3-hydroxykynurenine chromophore</note>
    </ligand>
</feature>
<feature type="binding site" description="covalent" evidence="6">
    <location>
        <position position="149"/>
    </location>
    <ligand>
        <name>3-hydroxy-L-kynurenine</name>
        <dbReference type="ChEBI" id="CHEBI:58125"/>
        <note>multimeric 3-hydroxykynurenine chromophore</note>
    </ligand>
</feature>
<feature type="site" description="Cleavage; in the presence of oxyhemoglobin or MPO" evidence="7">
    <location>
        <position position="199"/>
    </location>
</feature>
<feature type="site" description="Inhibitory (P1) (chymotrypsin, elastase)" evidence="1">
    <location>
        <begin position="241"/>
        <end position="242"/>
    </location>
</feature>
<feature type="site" description="Inhibitory (P1) (trypsin)" evidence="1">
    <location>
        <begin position="297"/>
        <end position="298"/>
    </location>
</feature>
<feature type="glycosylation site" id="CAR_000172" description="O-linked (GalNAc...) threonine" evidence="13">
    <location>
        <position position="24"/>
    </location>
</feature>
<feature type="glycosylation site" description="N-linked (GlcNAc...) (complex) asparagine" evidence="13">
    <location>
        <position position="36"/>
    </location>
</feature>
<feature type="glycosylation site" description="N-linked (GlcNAc...) (complex) asparagine" evidence="13 19">
    <location>
        <position position="115"/>
    </location>
</feature>
<feature type="glycosylation site" description="O-linked (Xyl...) (chondroitin sulfate) serine" evidence="15 25 28 30 31 33 37">
    <location>
        <position position="215"/>
    </location>
</feature>
<feature type="glycosylation site" description="N-linked (GlcNAc...) (complex) asparagine" evidence="19 33">
    <location>
        <position position="250"/>
    </location>
</feature>
<feature type="disulfide bond" evidence="20">
    <location>
        <begin position="91"/>
        <end position="188"/>
    </location>
</feature>
<feature type="disulfide bond" evidence="39">
    <location>
        <begin position="231"/>
        <end position="281"/>
    </location>
</feature>
<feature type="disulfide bond" evidence="39">
    <location>
        <begin position="240"/>
        <end position="264"/>
    </location>
</feature>
<feature type="disulfide bond" evidence="39">
    <location>
        <begin position="256"/>
        <end position="277"/>
    </location>
</feature>
<feature type="disulfide bond" evidence="39">
    <location>
        <begin position="287"/>
        <end position="337"/>
    </location>
</feature>
<feature type="disulfide bond" evidence="39">
    <location>
        <begin position="296"/>
        <end position="320"/>
    </location>
</feature>
<feature type="disulfide bond" evidence="39">
    <location>
        <begin position="312"/>
        <end position="333"/>
    </location>
</feature>
<feature type="mutagenesis site" description="Impairs the reductase activity toward cytochrome c independently of the electron donnor. Decreases the reductase activity toward methemoglobin. Decreases the reductase activity toward oxidized collagen." evidence="9 22">
    <original>C</original>
    <variation>S</variation>
    <location>
        <position position="53"/>
    </location>
</feature>
<feature type="mutagenesis site" description="Impairs the reductase activity toward cytochrome c in the presence of NADPH; when associated with T-137 and T-149. Impairs the reductase activity toward oxidized collagen; when associated with T-137 and T-149." evidence="9 22">
    <original>K</original>
    <variation>T</variation>
    <location>
        <position position="111"/>
    </location>
</feature>
<feature type="mutagenesis site" description="Impairs the reductase activity toward cytochrome c in the presence of NADPH; when associated with T-111 and T-149. Impairs the reductase activity toward oxidized collagen; when associated with T-111 and T-149." evidence="9 22">
    <original>K</original>
    <variation>T</variation>
    <location>
        <position position="137"/>
    </location>
</feature>
<feature type="mutagenesis site" description="Impairs the reductase activity toward cytochrome c in the presence of NADPH; when associated with T-111 and T-137. Impairs the reductase activity toward oxidized collagen; when associated with T-111 and T-137." evidence="9 22">
    <original>K</original>
    <variation>T</variation>
    <location>
        <position position="149"/>
    </location>
</feature>
<feature type="sequence conflict" description="In Ref. 11; AA sequence." evidence="44" ref="11">
    <location>
        <begin position="48"/>
        <end position="57"/>
    </location>
</feature>
<feature type="sequence conflict" description="In Ref. 10; AA sequence and 12; AA sequence." evidence="44" ref="10 12">
    <location>
        <position position="57"/>
    </location>
</feature>
<feature type="sequence conflict" description="In Ref. 11; AA sequence." evidence="44" ref="11">
    <location>
        <position position="137"/>
    </location>
</feature>
<feature type="sequence conflict" description="In Ref. 11; AA sequence." evidence="44" ref="11">
    <original>H</original>
    <variation>T</variation>
    <location>
        <position position="142"/>
    </location>
</feature>
<feature type="sequence conflict" description="In Ref. 11; AA sequence." evidence="44" ref="11">
    <location>
        <position position="145"/>
    </location>
</feature>
<feature type="sequence conflict" description="In Ref. 11; AA sequence." evidence="44" ref="11">
    <original>E</original>
    <variation>Q</variation>
    <location>
        <position position="194"/>
    </location>
</feature>
<feature type="sequence conflict" description="In Ref. 18; AA sequence." evidence="44" ref="18">
    <original>S</original>
    <variation>T</variation>
    <location>
        <position position="215"/>
    </location>
</feature>
<feature type="sequence conflict" description="In Ref. 18; AA sequence." evidence="44" ref="18">
    <original>G</original>
    <variation>T</variation>
    <location>
        <position position="218"/>
    </location>
</feature>
<feature type="sequence conflict" description="In Ref. 14; AA sequence and 15; AA sequence." evidence="44" ref="14 15">
    <original>IV</original>
    <variation>VI</variation>
    <location>
        <begin position="291"/>
        <end position="292"/>
    </location>
</feature>
<feature type="sequence conflict" description="In Ref. 15; AA sequence." evidence="44" ref="15">
    <location>
        <position position="295"/>
    </location>
</feature>
<feature type="sequence conflict" description="In Ref. 14; AA sequence." evidence="44" ref="14">
    <original>G</original>
    <variation>E</variation>
    <location>
        <position position="343"/>
    </location>
</feature>
<feature type="helix" evidence="50">
    <location>
        <begin position="37"/>
        <end position="39"/>
    </location>
</feature>
<feature type="strand" evidence="50">
    <location>
        <begin position="42"/>
        <end position="51"/>
    </location>
</feature>
<feature type="helix" evidence="50">
    <location>
        <begin position="54"/>
        <end position="59"/>
    </location>
</feature>
<feature type="helix" evidence="50">
    <location>
        <begin position="60"/>
        <end position="62"/>
    </location>
</feature>
<feature type="strand" evidence="50">
    <location>
        <begin position="66"/>
        <end position="72"/>
    </location>
</feature>
<feature type="strand" evidence="50">
    <location>
        <begin position="78"/>
        <end position="87"/>
    </location>
</feature>
<feature type="strand" evidence="50">
    <location>
        <begin position="90"/>
        <end position="100"/>
    </location>
</feature>
<feature type="strand" evidence="50">
    <location>
        <begin position="106"/>
        <end position="111"/>
    </location>
</feature>
<feature type="turn" evidence="50">
    <location>
        <begin position="112"/>
        <end position="115"/>
    </location>
</feature>
<feature type="strand" evidence="50">
    <location>
        <begin position="116"/>
        <end position="125"/>
    </location>
</feature>
<feature type="strand" evidence="50">
    <location>
        <begin position="127"/>
        <end position="142"/>
    </location>
</feature>
<feature type="strand" evidence="50">
    <location>
        <begin position="145"/>
        <end position="155"/>
    </location>
</feature>
<feature type="helix" evidence="50">
    <location>
        <begin position="159"/>
        <end position="170"/>
    </location>
</feature>
<feature type="turn" evidence="50">
    <location>
        <begin position="171"/>
        <end position="173"/>
    </location>
</feature>
<feature type="helix" evidence="50">
    <location>
        <begin position="176"/>
        <end position="178"/>
    </location>
</feature>
<feature type="strand" evidence="50">
    <location>
        <begin position="179"/>
        <end position="181"/>
    </location>
</feature>
<feature type="strand" evidence="51">
    <location>
        <begin position="215"/>
        <end position="218"/>
    </location>
</feature>
<feature type="strand" evidence="49">
    <location>
        <begin position="244"/>
        <end position="250"/>
    </location>
</feature>
<feature type="turn" evidence="49">
    <location>
        <begin position="251"/>
        <end position="254"/>
    </location>
</feature>
<feature type="strand" evidence="49">
    <location>
        <begin position="255"/>
        <end position="261"/>
    </location>
</feature>
<feature type="strand" evidence="49">
    <location>
        <begin position="263"/>
        <end position="265"/>
    </location>
</feature>
<feature type="strand" evidence="49">
    <location>
        <begin position="271"/>
        <end position="273"/>
    </location>
</feature>
<feature type="helix" evidence="49">
    <location>
        <begin position="274"/>
        <end position="281"/>
    </location>
</feature>
<feature type="helix" evidence="49">
    <location>
        <begin position="284"/>
        <end position="288"/>
    </location>
</feature>
<feature type="strand" evidence="49">
    <location>
        <begin position="300"/>
        <end position="306"/>
    </location>
</feature>
<feature type="turn" evidence="49">
    <location>
        <begin position="307"/>
        <end position="310"/>
    </location>
</feature>
<feature type="strand" evidence="49">
    <location>
        <begin position="311"/>
        <end position="317"/>
    </location>
</feature>
<feature type="strand" evidence="49">
    <location>
        <begin position="319"/>
        <end position="321"/>
    </location>
</feature>
<feature type="strand" evidence="49">
    <location>
        <begin position="327"/>
        <end position="329"/>
    </location>
</feature>
<feature type="helix" evidence="49">
    <location>
        <begin position="330"/>
        <end position="337"/>
    </location>
</feature>
<proteinExistence type="evidence at protein level"/>
<protein>
    <recommendedName>
        <fullName evidence="41">Protein AMBP</fullName>
    </recommendedName>
    <alternativeName>
        <fullName evidence="42">Protein HC</fullName>
    </alternativeName>
    <component>
        <recommendedName>
            <fullName evidence="43">Alpha-1-microglobulin</fullName>
            <ecNumber evidence="45">1.6.2.-</ecNumber>
        </recommendedName>
        <alternativeName>
            <fullName>Alpha-1 microglycoprotein</fullName>
        </alternativeName>
        <alternativeName>
            <fullName evidence="43">Complex-forming glycoprotein heterogeneous in charge</fullName>
        </alternativeName>
    </component>
    <component>
        <recommendedName>
            <fullName>Inter-alpha-trypsin inhibitor light chain</fullName>
            <shortName>ITI-LC</shortName>
        </recommendedName>
        <alternativeName>
            <fullName evidence="41">Bikunin</fullName>
        </alternativeName>
        <alternativeName>
            <fullName>EDC1</fullName>
        </alternativeName>
        <alternativeName>
            <fullName>HI-30</fullName>
        </alternativeName>
        <alternativeName>
            <fullName>Uronic-acid-rich protein</fullName>
        </alternativeName>
    </component>
    <component>
        <recommendedName>
            <fullName evidence="3">Trypstatin</fullName>
        </recommendedName>
    </component>
</protein>
<keyword id="KW-0002">3D-structure</keyword>
<keyword id="KW-1003">Cell membrane</keyword>
<keyword id="KW-0157">Chromophore</keyword>
<keyword id="KW-0165">Cleavage on pair of basic residues</keyword>
<keyword id="KW-0963">Cytoplasm</keyword>
<keyword id="KW-0903">Direct protein sequencing</keyword>
<keyword id="KW-1015">Disulfide bond</keyword>
<keyword id="KW-0256">Endoplasmic reticulum</keyword>
<keyword id="KW-0272">Extracellular matrix</keyword>
<keyword id="KW-0325">Glycoprotein</keyword>
<keyword id="KW-0945">Host-virus interaction</keyword>
<keyword id="KW-0472">Membrane</keyword>
<keyword id="KW-0496">Mitochondrion</keyword>
<keyword id="KW-0999">Mitochondrion inner membrane</keyword>
<keyword id="KW-0539">Nucleus</keyword>
<keyword id="KW-0560">Oxidoreductase</keyword>
<keyword id="KW-0646">Protease inhibitor</keyword>
<keyword id="KW-0654">Proteoglycan</keyword>
<keyword id="KW-1267">Proteomics identification</keyword>
<keyword id="KW-1185">Reference proteome</keyword>
<keyword id="KW-0677">Repeat</keyword>
<keyword id="KW-0964">Secreted</keyword>
<keyword id="KW-0722">Serine protease inhibitor</keyword>
<keyword id="KW-0732">Signal</keyword>
<evidence type="ECO:0000250" key="1"/>
<evidence type="ECO:0000250" key="2">
    <source>
        <dbReference type="UniProtKB" id="Q07456"/>
    </source>
</evidence>
<evidence type="ECO:0000250" key="3">
    <source>
        <dbReference type="UniProtKB" id="Q64240"/>
    </source>
</evidence>
<evidence type="ECO:0000255" key="4">
    <source>
        <dbReference type="PROSITE-ProRule" id="PRU00031"/>
    </source>
</evidence>
<evidence type="ECO:0000269" key="5">
    <source>
    </source>
</evidence>
<evidence type="ECO:0000269" key="6">
    <source>
    </source>
</evidence>
<evidence type="ECO:0000269" key="7">
    <source>
    </source>
</evidence>
<evidence type="ECO:0000269" key="8">
    <source>
    </source>
</evidence>
<evidence type="ECO:0000269" key="9">
    <source>
    </source>
</evidence>
<evidence type="ECO:0000269" key="10">
    <source>
    </source>
</evidence>
<evidence type="ECO:0000269" key="11">
    <source>
    </source>
</evidence>
<evidence type="ECO:0000269" key="12">
    <source>
    </source>
</evidence>
<evidence type="ECO:0000269" key="13">
    <source>
    </source>
</evidence>
<evidence type="ECO:0000269" key="14">
    <source>
    </source>
</evidence>
<evidence type="ECO:0000269" key="15">
    <source>
    </source>
</evidence>
<evidence type="ECO:0000269" key="16">
    <source>
    </source>
</evidence>
<evidence type="ECO:0000269" key="17">
    <source>
    </source>
</evidence>
<evidence type="ECO:0000269" key="18">
    <source>
    </source>
</evidence>
<evidence type="ECO:0000269" key="19">
    <source>
    </source>
</evidence>
<evidence type="ECO:0000269" key="20">
    <source>
    </source>
</evidence>
<evidence type="ECO:0000269" key="21">
    <source>
    </source>
</evidence>
<evidence type="ECO:0000269" key="22">
    <source>
    </source>
</evidence>
<evidence type="ECO:0000269" key="23">
    <source>
    </source>
</evidence>
<evidence type="ECO:0000269" key="24">
    <source>
    </source>
</evidence>
<evidence type="ECO:0000269" key="25">
    <source>
    </source>
</evidence>
<evidence type="ECO:0000269" key="26">
    <source>
    </source>
</evidence>
<evidence type="ECO:0000269" key="27">
    <source>
    </source>
</evidence>
<evidence type="ECO:0000269" key="28">
    <source>
    </source>
</evidence>
<evidence type="ECO:0000269" key="29">
    <source>
    </source>
</evidence>
<evidence type="ECO:0000269" key="30">
    <source>
    </source>
</evidence>
<evidence type="ECO:0000269" key="31">
    <source>
    </source>
</evidence>
<evidence type="ECO:0000269" key="32">
    <source>
    </source>
</evidence>
<evidence type="ECO:0000269" key="33">
    <source>
    </source>
</evidence>
<evidence type="ECO:0000269" key="34">
    <source>
    </source>
</evidence>
<evidence type="ECO:0000269" key="35">
    <source>
    </source>
</evidence>
<evidence type="ECO:0000269" key="36">
    <source>
    </source>
</evidence>
<evidence type="ECO:0000269" key="37">
    <source>
    </source>
</evidence>
<evidence type="ECO:0000269" key="38">
    <source>
    </source>
</evidence>
<evidence type="ECO:0000269" key="39">
    <source>
    </source>
</evidence>
<evidence type="ECO:0000269" key="40">
    <source ref="12"/>
</evidence>
<evidence type="ECO:0000303" key="41">
    <source>
    </source>
</evidence>
<evidence type="ECO:0000303" key="42">
    <source>
    </source>
</evidence>
<evidence type="ECO:0000303" key="43">
    <source>
    </source>
</evidence>
<evidence type="ECO:0000305" key="44"/>
<evidence type="ECO:0000305" key="45">
    <source>
    </source>
</evidence>
<evidence type="ECO:0000305" key="46">
    <source>
    </source>
</evidence>
<evidence type="ECO:0000305" key="47">
    <source>
    </source>
</evidence>
<evidence type="ECO:0000305" key="48">
    <source>
    </source>
</evidence>
<evidence type="ECO:0007829" key="49">
    <source>
        <dbReference type="PDB" id="1BIK"/>
    </source>
</evidence>
<evidence type="ECO:0007829" key="50">
    <source>
        <dbReference type="PDB" id="4ES7"/>
    </source>
</evidence>
<evidence type="ECO:0007829" key="51">
    <source>
        <dbReference type="PDB" id="6EJC"/>
    </source>
</evidence>
<comment type="function">
    <molecule>Alpha-1-microglobulin</molecule>
    <text evidence="2 7 9 17 18 21 22 26 27 29">Antioxidant and tissue repair protein with reductase, heme-binding and radical-scavenging activities. Removes and protects against harmful oxidants and repairs macromolecules in intravascular and extravascular spaces and in intracellular compartments (PubMed:11877257, PubMed:15683711, PubMed:22096585, PubMed:23157686, PubMed:23642167, PubMed:25698971, PubMed:32092412, PubMed:32823731). Intravascularly, plays a regulatory role in red cell homeostasis by preventing heme- and reactive oxygen species-induced cell damage. Binds and degrades free heme to protect fetal and adult red blood cells from hemolysis (PubMed:11877257, PubMed:32092412). Reduces extracellular methemoglobin, a Fe3+ (ferric) form of hemoglobin that cannot bind oxygen, back to the Fe2+ (ferrous) form deoxyhemoglobin, which has oxygen-carrying potential (PubMed:15683711). Upon acute inflammation, inhibits oxidation of low-density lipoprotein particles by MPO and limits vascular damage (PubMed:25698971). Extravascularly, protects from oxidation products formed on extracellular matrix structures and cell membranes. Catalyzes the reduction of carbonyl groups on oxidized collagen fibers and preserves cellular and extracellular matrix ultrastructures (PubMed:22096585, PubMed:23642167). Importantly, counteracts the oxidative damage at blood-placenta interface, preventing leakage of free fetal hemoglobin into the maternal circulation (PubMed:21356557). Intracellularly, has a role in maintaining mitochondrial redox homeostasis. Bound to complex I of the respiratory chain of mitochondria, may scavenge free radicals and preserve mitochondrial ATP synthesis. Protects renal tubule epithelial cells from heme-induced oxidative damage to mitochondria (PubMed:23157686, PubMed:32823731). Reduces cytochrome c from Fe3+ (ferric) to the Fe2+ (ferrous) state through formation of superoxide anion radicals in the presence of ascorbate or NADH/NADPH electron donor cofactors, ascorbate being the preferred cofactor (PubMed:15683711). Has a chaperone role in facilitating the correct folding of bikunin in the endoplasmic reticulum compartment (By similarity).</text>
</comment>
<comment type="function">
    <molecule>Inter-alpha-trypsin inhibitor light chain</molecule>
    <text evidence="2 5 10 12 16 24 36">Kunitz-type serine protease inhibitor and structural component of extracellular matrix with a role in extracellular space remodeling and cell adhesion (PubMed:20463016, PubMed:25301953). Among others, has antiprotease activity toward kallikrein, a protease involved in airway inflammation; inhibits GZMK/granzyme, a granule-stored serine protease involved in NK and T cell cytotoxic responses; and inhibits PLG/plasmin, a protease required for activation of matrix metalloproteinases (PubMed:10480954, PubMed:15917224, PubMed:16873769). As part of I-alpha-I complex, provides for the heavy chains to be transferred from I-alpha-I complex to hyaluronan in the presence of TNFAIP6, in a dynamic process that releases free bikunin and remodels extracellular matrix proteoglycan structures. Free bikunin, but not its heavy chain-bound form, acts as potent protease inhibitor in airway secretions (PubMed:16873769). Part of hyaluronan-rich extracellular matrix that surrounds oocyte during cumulus oophorus expansion, an indispensable process for proper ovulation (By similarity). Also inhibits calcium oxalate crystallization (PubMed:7676539).</text>
</comment>
<comment type="function">
    <molecule>Trypstatin</molecule>
    <text evidence="3">Kunitz-type serine protease inhibitor. Has high catalytic efficiency for F10/blood coagulation factor Xa and may act as an anticoagulant by inhibiting prothrombin activation. Inhibits trypsin and mast cell CMA1/chymase and tryptase proteases.</text>
</comment>
<comment type="activity regulation">
    <molecule>Inter-alpha-trypsin inhibitor light chain</molecule>
    <text evidence="10 12">Up-regulated by TNFAIP6. In a transesterification reaction, TNFAIP6 cleaves the ester bond between the heavy chain and the chondroitin sulfate chain in I-alpha-I complex and potentiates the antiprotease function of I-alpha-I complex through release of free bikunin.</text>
</comment>
<comment type="biophysicochemical properties">
    <phDependence>
        <text evidence="9">The reductase activity toward cytochrome c increases at alkaline pH 8-9 when compared to pH 6-7.</text>
    </phDependence>
</comment>
<comment type="subunit">
    <molecule>Alpha-1-microglobulin</molecule>
    <text evidence="3 20 21 38">Monomer (PubMed:22512701, PubMed:9183005). Homodimer (PubMed:9183005). In plasma, it occurs as a monomer or dimer and in covalently-linked complexes with immunoglobulin A (IgA), ALB/albumin and F2/prothrombin (PubMed:9183005). Chromophore-bound alpha-1-microglobulin interacts with the constant region of immunoglobulin A (PubMed:9183005). Chromophore-bound alpha-1-microglobulin interacts with ALB with molar ratio 2:1 and 1:1; this interaction does not prevent fatty acid binding to ALB (PubMed:9183005). Interacts with F2/prothrombin (via N-terminus) with molar ratio 2:1 and 1:1; this interaction does not prevent the activation of prothrombin to thrombin (PubMed:9183005). Interacts with NDUFAB1, a subunit of mitochondrial complex I (PubMed:23157686). Interacts with FN1 (By similarity).</text>
</comment>
<comment type="subunit">
    <molecule>Inter-alpha-trypsin inhibitor light chain</molecule>
    <text evidence="10 12 23">I-alpha-I plasma protease inhibitors are assembled from one or two heavy chains (HC) and one light chain, bikunin. Inter-alpha-inhibitor (I-alpha-I) is composed of ITIH1/HC1, ITIH2/HC2 and bikunin, and pre-alpha-inhibitor (P-alpha-I) of ITIH3/HC3 and bikunin (PubMed:16873769, PubMed:2476436). Interacts with TNFAIP6 (via Link domain) (PubMed:15917224).</text>
</comment>
<comment type="subunit">
    <molecule>Trypstatin</molecule>
    <text evidence="3">Monomer. Also occurs as a complex with tryptase in mast cells.</text>
</comment>
<comment type="subunit">
    <molecule>Alpha-1-microglobulin</molecule>
    <text evidence="8">(Microbial infection) Interacts with hepatitis E virus/HEV protein ORF3.</text>
</comment>
<comment type="subunit">
    <molecule>Inter-alpha-trypsin inhibitor light chain</molecule>
    <text evidence="11">(Microbial infection) Interacts with hepatitis E virus/HEV protein ORF3.</text>
</comment>
<comment type="interaction">
    <interactant intactId="EBI-2115136">
        <id>P02760</id>
    </interactant>
    <interactant intactId="EBI-715062">
        <id>P07858</id>
        <label>CTSB</label>
    </interactant>
    <organismsDiffer>false</organismsDiffer>
    <experiments>4</experiments>
</comment>
<comment type="interaction">
    <interactant intactId="EBI-2115136">
        <id>P02760</id>
    </interactant>
    <interactant intactId="EBI-741101">
        <id>Q13643</id>
        <label>FHL3</label>
    </interactant>
    <organismsDiffer>false</organismsDiffer>
    <experiments>3</experiments>
</comment>
<comment type="subcellular location">
    <molecule>Alpha-1-microglobulin</molecule>
    <subcellularLocation>
        <location evidence="7 27 31">Secreted</location>
    </subcellularLocation>
    <subcellularLocation>
        <location evidence="18">Endoplasmic reticulum</location>
    </subcellularLocation>
    <subcellularLocation>
        <location evidence="27">Cytoplasm</location>
        <location evidence="27">Cytosol</location>
    </subcellularLocation>
    <subcellularLocation>
        <location evidence="18 27">Cell membrane</location>
        <topology evidence="46 48">Peripheral membrane protein</topology>
    </subcellularLocation>
    <subcellularLocation>
        <location evidence="18">Nucleus membrane</location>
        <topology evidence="46">Peripheral membrane protein</topology>
    </subcellularLocation>
    <subcellularLocation>
        <location evidence="47">Mitochondrion inner membrane</location>
        <topology evidence="47">Peripheral membrane protein</topology>
    </subcellularLocation>
    <subcellularLocation>
        <location evidence="18">Secreted</location>
        <location evidence="18">Extracellular space</location>
        <location evidence="18">Extracellular matrix</location>
    </subcellularLocation>
    <text evidence="18">The cellular uptake occurs via a non-endocytotic pathway and allows for localization to various membrane structures. A specific binding to plasma membrane suggests the presence of a cell receptor, yet to be identified. Directly binds collagen fibers type I.</text>
</comment>
<comment type="subcellular location">
    <molecule>Inter-alpha-trypsin inhibitor light chain</molecule>
    <subcellularLocation>
        <location evidence="25 30">Secreted</location>
    </subcellularLocation>
</comment>
<comment type="tissue specificity">
    <molecule>Alpha-1-microglobulin</molecule>
    <text evidence="7 17 18 27">Expressed by the liver and secreted in plasma. Occurs in many physiological fluids including plasma, urine, and cerebrospinal fluid (PubMed:11877257). Expressed in epidermal keratinocytes, in dermis and epidermal-dermal junction (at protein level) (PubMed:22096585). Expressed in red blood cells (at protein level) (PubMed:32092412). Expressed in placenta (PubMed:21356557).</text>
</comment>
<comment type="tissue specificity">
    <molecule>Inter-alpha-trypsin inhibitor light chain</molecule>
    <text evidence="12 25 28 30 31">Detected in placenta (at protein level) (PubMed:32337544). Detected in cerebrospinal fluid, plasma and urine (at protein level) (PubMed:25326458, PubMed:36213313, PubMed:37453717). Expressed in airway epithelium and submucosal gland (at protein level). Colocalizes with TNFAIP6 at the ciliary border. Present in bronchoalveolar lavage fluid (at protein level).</text>
</comment>
<comment type="induction">
    <molecule>Alpha-1-microglobulin</molecule>
    <text evidence="17 18 22">Up-regulated upon oxidative stress (PubMed:21356557, PubMed:22096585, PubMed:23642167). Up-regulated in keratinocytes upon exposure to heme and reactive oxygen species (PubMed:22096585). Up-regulated in hemoglobin-perfused placenta (PubMed:21356557).</text>
</comment>
<comment type="induction">
    <molecule>Inter-alpha-trypsin inhibitor light chain</molecule>
    <text evidence="12">Up-regulated in airway epithelium and submucosal gland in response to inflammatory cytokine TNF.</text>
</comment>
<comment type="domain">
    <molecule>Inter-alpha-trypsin inhibitor light chain</molecule>
    <text evidence="24 39">The Kunitz domains 1 and 2 serve as protease inhibitor domains.</text>
</comment>
<comment type="PTM">
    <text evidence="44">The precursor is proteolytically processed into separately functioning proteins.</text>
</comment>
<comment type="PTM">
    <molecule>Alpha-1-microglobulin</molecule>
    <text evidence="7 9 26">Proteolytically cleaved in the presence of oxyhemoglobin or MPO (PubMed:11877257, PubMed:25698971). The cleaved form t-alpha-1-microglobulin lacks the C-terminal tetrapeptide LIPR and is released from IgA-alpha-1-microglobulin complex as well as from free alpha-1-microglobulin when exposed to oxyhemoglobin or erythrocyte membranes. The cleavage of IgA-alpha-1-microglobulin complex is associated with the reduction of the covalent bond between IgA and alpha-1-microglobulin, yielding an intact IgA molecule (PubMed:11877257). The cleavage by MPO is associated with the transfer of heme group from MPO to t-alpha-1-microglobulin (PubMed:25698971). t-alpha-1-microglobulin has higher reductase activity when compared with full length protein (PubMed:15683711).</text>
</comment>
<comment type="PTM">
    <molecule>Alpha-1-microglobulin</molecule>
    <text evidence="6 14 35">3-hydroxykynurenine, an oxidized tryptophan metabolite that is common in biological fluids, reacts with Cys-53, Lys-111, Lys-137, and Lys-149 to form heterogeneous polycyclic chromophores including hydroxanthommatin. The reaction by alpha-1-microglobulin is autocatalytic; the human protein forms chromophore even when expressed in insect and bacterial cells. The chromophore can react with accessible cysteines forming non-reducible thioether cross-links with other molecules of alpha-1-microglobulin or with other proteins such as Ig alpha-1 chain C region 'Cys-352'.</text>
</comment>
<comment type="PTM">
    <molecule>Inter-alpha-trypsin inhibitor light chain</molecule>
    <text evidence="15 33 37">Heavy chains are interlinked with bikunin via a chondroitin 4-sulfate bridge to the C-terminal aspartate.</text>
</comment>
<comment type="PTM">
    <molecule>Inter-alpha-trypsin inhibitor light chain</molecule>
    <text evidence="24">Proteolytically cleaved by PRSS3 at Kunitz domain 2.</text>
</comment>
<comment type="PTM">
    <text evidence="13 19 33">N-glycosylated. N-glycan heterogeneity at Asn-115: Hex5HexNAc4 (major), Hex6HexNAc5 (minor) and dHex1Hex6HexNAc5 (minor). N-glycan at Asn-250: Hex5HexNAc4.</text>
</comment>
<comment type="PTM">
    <text evidence="13 15 19 33 37">O-glycosylated. O-linkage of the glycosaminoglycan, chondroitin sulfate, at Ser-215 allows cross-linking between the three polypeptide chains.</text>
</comment>
<comment type="miscellaneous">
    <text>In vitro, the first twelve residues of the amino end of the inhibitor appear to have a reactive site capable of inhibiting the activity of a number of enzymes. Its in vivo function is not known.</text>
</comment>
<comment type="similarity">
    <text evidence="44">In the N-terminal section; belongs to the calycin superfamily. Lipocalin family.</text>
</comment>